<gene>
    <name type="primary">rep</name>
    <name type="ORF">1a-1b</name>
</gene>
<reference key="1">
    <citation type="journal article" date="2005" name="J. Virol.">
        <title>Characterization and complete genome sequence of a novel coronavirus, coronavirus HKU1, from patients with pneumonia.</title>
        <authorList>
            <person name="Woo P.C.Y."/>
            <person name="Lau S.K.P."/>
            <person name="Chu C.-M."/>
            <person name="Chan K.-H."/>
            <person name="Tsoi H.-W."/>
            <person name="Huang Y."/>
            <person name="Wong B.H.L."/>
            <person name="Poon R.W.S."/>
            <person name="Cai J.J."/>
            <person name="Luk W.-K."/>
            <person name="Poon L.L.M."/>
            <person name="Wong S.S.Y."/>
            <person name="Guan Y."/>
            <person name="Peiris J.S.M."/>
            <person name="Yuen K.-Y."/>
        </authorList>
    </citation>
    <scope>NUCLEOTIDE SEQUENCE [GENOMIC RNA]</scope>
</reference>
<proteinExistence type="inferred from homology"/>
<comment type="function">
    <text evidence="2">The replicase polyprotein of coronaviruses is a multifunctional protein: it contains the activities necessary for the transcription of negative stranded RNA, leader RNA, subgenomic mRNAs and progeny virion RNA as well as proteinases responsible for the cleavage of the polyprotein into functional products.</text>
</comment>
<comment type="function">
    <molecule>Host translation inhibitor nsp1</molecule>
    <text evidence="2">Inhibits host translation by interacting with the 40S ribosomal subunit. The nsp1-40S ribosome complex further induces an endonucleolytic cleavage near the 5'UTR of host mRNAs, targeting them for degradation. Viral mRNAs are not susceptible to nsp1-mediated endonucleolytic RNA cleavage thanks to the presence of a 5'-end leader sequence and are therefore protected from degradation. By suppressing host gene expression, nsp1 facilitates efficient viral gene expression in infected cells and evasion from host immune response.</text>
</comment>
<comment type="function">
    <molecule>Non-structural protein 2</molecule>
    <text evidence="2">May play a role in the modulation of host cell survival signaling pathway by interacting with host PHB and PHB2. Indeed, these two proteins play a role in maintaining the functional integrity of the mitochondria and protecting cells from various stresses.</text>
</comment>
<comment type="function">
    <molecule>Papain-like proteinase nsp3</molecule>
    <text evidence="2">Responsible for the cleavages located at the N-terminus of the replicase polyprotein. In addition, PL-PRO possesses a deubiquitinating/deISGylating activity and processes both 'Lys-48'- and 'Lys-63'-linked polyubiquitin chains from cellular substrates. Participates together with nsp4 in the assembly of virally-induced cytoplasmic double-membrane vesicles necessary for viral replication. Antagonizes innate immune induction of type I interferon by blocking the phosphorylation, dimerization and subsequent nuclear translocation of host IRF3. Also prevents host NF-kappa-B signaling.</text>
</comment>
<comment type="function">
    <molecule>Non-structural protein 4</molecule>
    <text evidence="2">Participates in the assembly of virally-induced cytoplasmic double-membrane vesicles necessary for viral replication.</text>
</comment>
<comment type="function">
    <molecule>3C-like proteinase nsp5</molecule>
    <text evidence="2 8">Cleaves the C-terminus of replicase polyprotein at 11 sites. Recognizes substrates containing the core sequence [ILMVF]-Q-|-[SGACN]. Also able to bind an ADP-ribose-1''-phosphate (ADRP).</text>
</comment>
<comment type="function">
    <molecule>Non-structural protein 6</molecule>
    <text evidence="2">Plays a role in the initial induction of autophagosomes from host endoplasmic reticulum. Later, limits the expansion of these phagosomes that are no longer able to deliver viral components to lysosomes.</text>
</comment>
<comment type="function">
    <molecule>Non-structural protein 7</molecule>
    <text evidence="2">Forms a hexadecamer with nsp8 (8 subunits of each) that may participate in viral replication by acting as a primase. Alternatively, may synthesize substantially longer products than oligonucleotide primers.</text>
</comment>
<comment type="function">
    <molecule>Non-structural protein 8</molecule>
    <text evidence="2">Forms a hexadecamer with nsp7 (8 subunits of each) that may participate in viral replication by acting as a primase. Alternatively, may synthesize substantially longer products than oligonucleotide primers.</text>
</comment>
<comment type="function">
    <molecule>Viral protein genome-linked nsp9</molecule>
    <text evidence="3">Forms a primer, NSP9-pU, which is utilized by the polymerase for the initiation of RNA chains. Interacts with ribosome signal recognition particle RNA (SRP). Together with NSP8, suppress protein integration into the cell membrane, thereby disrupting host immune defenses.</text>
</comment>
<comment type="function">
    <molecule>Non-structural protein 10</molecule>
    <text evidence="2">Plays a pivotal role in viral transcription by stimulating both nsp14 3'-5' exoribonuclease and nsp16 2'-O-methyltransferase activities. Therefore plays an essential role in viral mRNAs cap methylation.</text>
</comment>
<comment type="function">
    <molecule>RNA-directed RNA polymerase nsp12</molecule>
    <text evidence="3">RNA-directed RNA polymerase that catalyzes the transcription of viral genomic and subgenomic RNAs. Acts in complex with nsp7 and nsp8 to transcribe both the minus and positive strands of genomic RNA. The kinase-like NiRAN domain of NSP12 attaches one or more nucleotides to the amino terminus of NSP9, forming a covalent RNA-protein intermediate that serves as transcription/replication primer. Subgenomic RNAs (sgRNAs) are formed by discontinuous transcription: The polymerase has the ability to pause at transcription-regulating sequences (TRS) and jump to the leader TRS, resulting in a major deletion. This creates a series of subgenomic RNAs that are replicated, transcribed and translated. In addition, Nsp12 is a subunit of the viral RNA capping enzyme that catalyzes the RNA guanylyltransferase reaction for genomic and sub-genomic RNAs. Subsequently, the NiRAN domain transfers RNA to GDP, and forms the core cap structure GpppA-RNA.</text>
</comment>
<comment type="function">
    <molecule>Helicase nsp13</molecule>
    <text evidence="2">Multi-functional protein with a zinc-binding domain in N-terminus displaying RNA and DNA duplex-unwinding activities with 5' to 3' polarity. Activity of helicase is dependent on magnesium.</text>
</comment>
<comment type="function">
    <molecule>Guanine-N7 methyltransferase nsp14</molecule>
    <text evidence="2">Plays a role in viral RNA synthesis through two distinct activities. The N7-guanine methyltransferase activity plays a role in the formation of the cap structure GpppA-RNA. The proofreading exoribonuclease reduces the sensitivity of the virus to RNA mutagens during replication. This activity acts on both ssRNA and dsRNA in a 3'-5' direction.</text>
</comment>
<comment type="function">
    <molecule>Uridylate-specific endoribonuclease nsp15</molecule>
    <text evidence="2">Plays a role in viral transcription/replication and prevents the simultaneous activation of host cell dsRNA sensors, such as MDA5/IFIH1, OAS, and PKR (By similarity). Acts by degrading the 5'-polyuridines generated during replication of the poly(A) region of viral genomic and subgenomic RNAs. Catalyzes a two-step reaction in which a 2'3'-cyclic phosphate (2'3'-cP) is first generated by 2'-O transesterification, which is then hydrolyzed to a 3'-phosphate (3'-P) (By similarity). If not degraded, poly(U) RNA would hybridize with poly(A) RNA tails and activate host dsRNA sensors (By similarity).</text>
</comment>
<comment type="function">
    <molecule>2'-O-methyltransferase nsp16</molecule>
    <text evidence="2">Methyltransferase that mediates mRNA cap 2'-O-ribose methylation to the 5'-cap structure of viral mRNAs. N7-methyl guanosine cap is a prerequisite for binding of nsp16. Therefore plays an essential role in viral mRNAs cap methylation which is essential to evade immune system.</text>
</comment>
<comment type="catalytic activity">
    <molecule>RNA-directed RNA polymerase nsp12</molecule>
    <reaction>
        <text>RNA(n) + a ribonucleoside 5'-triphosphate = RNA(n+1) + diphosphate</text>
        <dbReference type="Rhea" id="RHEA:21248"/>
        <dbReference type="Rhea" id="RHEA-COMP:14527"/>
        <dbReference type="Rhea" id="RHEA-COMP:17342"/>
        <dbReference type="ChEBI" id="CHEBI:33019"/>
        <dbReference type="ChEBI" id="CHEBI:61557"/>
        <dbReference type="ChEBI" id="CHEBI:140395"/>
        <dbReference type="EC" id="2.7.7.48"/>
    </reaction>
</comment>
<comment type="catalytic activity">
    <molecule>Helicase nsp13</molecule>
    <reaction>
        <text>ATP + H2O = ADP + phosphate + H(+)</text>
        <dbReference type="Rhea" id="RHEA:13065"/>
        <dbReference type="ChEBI" id="CHEBI:15377"/>
        <dbReference type="ChEBI" id="CHEBI:15378"/>
        <dbReference type="ChEBI" id="CHEBI:30616"/>
        <dbReference type="ChEBI" id="CHEBI:43474"/>
        <dbReference type="ChEBI" id="CHEBI:456216"/>
        <dbReference type="EC" id="3.6.4.12"/>
    </reaction>
</comment>
<comment type="catalytic activity">
    <molecule>Helicase nsp13</molecule>
    <reaction>
        <text>ATP + H2O = ADP + phosphate + H(+)</text>
        <dbReference type="Rhea" id="RHEA:13065"/>
        <dbReference type="ChEBI" id="CHEBI:15377"/>
        <dbReference type="ChEBI" id="CHEBI:15378"/>
        <dbReference type="ChEBI" id="CHEBI:30616"/>
        <dbReference type="ChEBI" id="CHEBI:43474"/>
        <dbReference type="ChEBI" id="CHEBI:456216"/>
        <dbReference type="EC" id="3.6.4.13"/>
    </reaction>
</comment>
<comment type="catalytic activity">
    <molecule>Papain-like proteinase nsp3</molecule>
    <reaction>
        <text>Thiol-dependent hydrolysis of ester, thioester, amide, peptide and isopeptide bonds formed by the C-terminal Gly of ubiquitin (a 76-residue protein attached to proteins as an intracellular targeting signal).</text>
        <dbReference type="EC" id="3.4.19.12"/>
    </reaction>
</comment>
<comment type="catalytic activity">
    <molecule>2'-O-methyltransferase nsp16</molecule>
    <reaction evidence="2">
        <text>a 5'-end (N(7)-methyl 5'-triphosphoguanosine)-ribonucleoside in mRNA + S-adenosyl-L-methionine = a 5'-end (N(7)-methyl 5'-triphosphoguanosine)-(2'-O-methyl-ribonucleoside) in mRNA + S-adenosyl-L-homocysteine + H(+)</text>
        <dbReference type="Rhea" id="RHEA:67020"/>
        <dbReference type="Rhea" id="RHEA-COMP:17167"/>
        <dbReference type="Rhea" id="RHEA-COMP:17168"/>
        <dbReference type="ChEBI" id="CHEBI:15378"/>
        <dbReference type="ChEBI" id="CHEBI:57856"/>
        <dbReference type="ChEBI" id="CHEBI:59789"/>
        <dbReference type="ChEBI" id="CHEBI:156461"/>
        <dbReference type="ChEBI" id="CHEBI:167609"/>
        <dbReference type="EC" id="2.1.1.57"/>
    </reaction>
</comment>
<comment type="catalytic activity">
    <molecule>Uridylate-specific endoribonuclease nsp15</molecule>
    <reaction evidence="2">
        <text>uridylyl-uridylyl-ribonucleotide-RNA = a 3'-end uridylyl-2',3'-cyclophospho-uridine-RNA + a 5'-end dephospho-ribonucleoside-RNA</text>
        <dbReference type="Rhea" id="RHEA:67732"/>
        <dbReference type="Rhea" id="RHEA-COMP:13936"/>
        <dbReference type="Rhea" id="RHEA-COMP:17334"/>
        <dbReference type="Rhea" id="RHEA-COMP:17335"/>
        <dbReference type="ChEBI" id="CHEBI:138284"/>
        <dbReference type="ChEBI" id="CHEBI:173079"/>
        <dbReference type="ChEBI" id="CHEBI:173080"/>
    </reaction>
</comment>
<comment type="catalytic activity">
    <molecule>RNA-directed RNA polymerase nsp12</molecule>
    <reaction evidence="3">
        <text>a 5'-end diphospho-ribonucleoside in mRNA + GTP + H(+) = a 5'-end (5'-triphosphoguanosine)-ribonucleoside in mRNA + diphosphate</text>
        <dbReference type="Rhea" id="RHEA:67012"/>
        <dbReference type="Rhea" id="RHEA-COMP:17165"/>
        <dbReference type="Rhea" id="RHEA-COMP:17166"/>
        <dbReference type="ChEBI" id="CHEBI:15378"/>
        <dbReference type="ChEBI" id="CHEBI:33019"/>
        <dbReference type="ChEBI" id="CHEBI:37565"/>
        <dbReference type="ChEBI" id="CHEBI:167616"/>
        <dbReference type="ChEBI" id="CHEBI:167617"/>
        <dbReference type="EC" id="2.7.7.50"/>
    </reaction>
    <physiologicalReaction direction="left-to-right" evidence="3">
        <dbReference type="Rhea" id="RHEA:67013"/>
    </physiologicalReaction>
</comment>
<comment type="catalytic activity">
    <molecule>Guanine-N7 methyltransferase nsp14</molecule>
    <reaction evidence="2">
        <text>a 5'-end (5'-triphosphoguanosine)-ribonucleoside in mRNA + S-adenosyl-L-methionine = a 5'-end (N(7)-methyl 5'-triphosphoguanosine)-ribonucleoside in mRNA + S-adenosyl-L-homocysteine</text>
        <dbReference type="Rhea" id="RHEA:67008"/>
        <dbReference type="Rhea" id="RHEA-COMP:17166"/>
        <dbReference type="Rhea" id="RHEA-COMP:17167"/>
        <dbReference type="ChEBI" id="CHEBI:57856"/>
        <dbReference type="ChEBI" id="CHEBI:59789"/>
        <dbReference type="ChEBI" id="CHEBI:156461"/>
        <dbReference type="ChEBI" id="CHEBI:167617"/>
        <dbReference type="EC" id="2.1.1.56"/>
    </reaction>
    <physiologicalReaction direction="left-to-right" evidence="2">
        <dbReference type="Rhea" id="RHEA:67009"/>
    </physiologicalReaction>
</comment>
<comment type="cofactor">
    <molecule>Uridylate-specific endoribonuclease nsp15</molecule>
    <cofactor evidence="2">
        <name>Mn(2+)</name>
        <dbReference type="ChEBI" id="CHEBI:29035"/>
    </cofactor>
    <text evidence="2">Likely affects Nsp15 binding to RNA.</text>
</comment>
<comment type="cofactor">
    <molecule>RNA-directed RNA polymerase nsp12</molecule>
    <cofactor evidence="3">
        <name>Mg(2+)</name>
        <dbReference type="ChEBI" id="CHEBI:18420"/>
    </cofactor>
</comment>
<comment type="subunit">
    <molecule>Non-structural protein 2</molecule>
    <text evidence="2">Interacts with host PHB and PHB2.</text>
</comment>
<comment type="subunit">
    <molecule>Non-structural protein 4</molecule>
    <text evidence="2">Interacts with papain-like protease nsp3 and non-structural protein 6.</text>
</comment>
<comment type="subunit">
    <molecule>3C-like proteinase nsp5</molecule>
    <text evidence="2">Monomer. Homodimer. Only the homodimer shows catalytic activity.</text>
</comment>
<comment type="subunit">
    <molecule>Non-structural protein 7</molecule>
    <text evidence="3">Interacts with nsp8 and nsp12 to form the replication-transcription complex (RTC): nsp12, nsp7, two subunits of nsp8, and up to two subunits of nsp13.</text>
</comment>
<comment type="subunit">
    <molecule>Non-structural protein 8</molecule>
    <text evidence="3">Interacts with nsp7, nsp13 and nsp12 to form the replication-transcription complex (RTC): nsp12, nsp7, two subunits of nsp8, and up to two subunits of nsp13.</text>
</comment>
<comment type="subunit">
    <molecule>Viral protein genome-linked nsp9</molecule>
    <text evidence="3">Interacts with nsp12.</text>
</comment>
<comment type="subunit">
    <molecule>Non-structural protein 10</molecule>
    <text evidence="3">Interacts with proofreading exoribonuclease nsp14 and 2'-O-methyltransferase nsp16; these interactions enhance nsp14 and nsp16 enzymatic activities.</text>
</comment>
<comment type="subunit">
    <molecule>RNA-directed RNA polymerase nsp12</molecule>
    <text evidence="3">Interacts with nsp7 and nsp8 to form the replication-transcription complex (RTC): nsp12, nsp7, two subunits of nsp8, and up to two subunits of nsp13. Interacts with nsp9.</text>
</comment>
<comment type="subunit">
    <molecule>Helicase nsp13</molecule>
    <text evidence="3">Interacts with nsp8 to form the replication-transcription complex (RTC): nsp12, nsp7, two subunits of nsp8, and up to two subunits of nsp13.</text>
</comment>
<comment type="subcellular location">
    <molecule>Papain-like proteinase nsp3</molecule>
    <subcellularLocation>
        <location>Host membrane</location>
        <topology>Multi-pass membrane protein</topology>
    </subcellularLocation>
    <subcellularLocation>
        <location evidence="2">Host cytoplasm</location>
    </subcellularLocation>
</comment>
<comment type="subcellular location">
    <molecule>Non-structural protein 4</molecule>
    <subcellularLocation>
        <location>Host membrane</location>
        <topology>Multi-pass membrane protein</topology>
    </subcellularLocation>
    <subcellularLocation>
        <location>Host cytoplasm</location>
    </subcellularLocation>
    <text evidence="2">Localizes in virally-induced cytoplasmic double-membrane vesicles.</text>
</comment>
<comment type="subcellular location">
    <molecule>Non-structural protein 6</molecule>
    <subcellularLocation>
        <location evidence="35">Host membrane</location>
        <topology evidence="35">Multi-pass membrane protein</topology>
    </subcellularLocation>
</comment>
<comment type="subcellular location">
    <molecule>Non-structural protein 7</molecule>
    <subcellularLocation>
        <location evidence="1">Host cytoplasm</location>
        <location evidence="1">Host perinuclear region</location>
    </subcellularLocation>
    <text>nsp7, nsp8, nsp9 and nsp10 are localized in cytoplasmic foci, largely perinuclear. Late in infection, they merge into confluent complexes.</text>
</comment>
<comment type="subcellular location">
    <molecule>Non-structural protein 8</molecule>
    <subcellularLocation>
        <location evidence="1">Host cytoplasm</location>
        <location evidence="1">Host perinuclear region</location>
    </subcellularLocation>
    <text>nsp7, nsp8, nsp9 and nsp10 are localized in cytoplasmic foci, largely perinuclear. Late in infection, they merge into confluent complexes.</text>
</comment>
<comment type="subcellular location">
    <molecule>Viral protein genome-linked nsp9</molecule>
    <subcellularLocation>
        <location evidence="1">Host cytoplasm</location>
        <location evidence="1">Host perinuclear region</location>
    </subcellularLocation>
    <text>nsp7, nsp8, nsp9 and nsp10 are localized in cytoplasmic foci, largely perinuclear. Late in infection, they merge into confluent complexes.</text>
</comment>
<comment type="subcellular location">
    <molecule>Non-structural protein 10</molecule>
    <subcellularLocation>
        <location evidence="1">Host cytoplasm</location>
        <location evidence="1">Host perinuclear region</location>
    </subcellularLocation>
    <text>nsp7, nsp8, nsp9 and nsp10 are localized in cytoplasmic foci, largely perinuclear. Late in infection, they merge into confluent complexes.</text>
</comment>
<comment type="subcellular location">
    <molecule>Helicase nsp13</molecule>
    <subcellularLocation>
        <location evidence="35">Host endoplasmic reticulum-Golgi intermediate compartment</location>
    </subcellularLocation>
    <text>The helicase interacts with the N protein in membranous complexes and colocalizes with sites of synthesis of new viral RNA.</text>
</comment>
<comment type="subcellular location">
    <molecule>Uridylate-specific endoribonuclease nsp15</molecule>
    <subcellularLocation>
        <location evidence="1">Host cytoplasm</location>
        <location evidence="1">Host perinuclear region</location>
    </subcellularLocation>
</comment>
<comment type="alternative products">
    <event type="ribosomal frameshifting"/>
    <isoform>
        <id>P0C6X2-1</id>
        <name>Replicase polyprotein 1ab</name>
        <name>pp1ab</name>
        <sequence type="displayed"/>
    </isoform>
    <isoform>
        <id>P0C6U3-1</id>
        <name>Replicase polyprotein 1a</name>
        <name>pp1a</name>
        <name>ORF1a polyprotein</name>
        <sequence type="external"/>
    </isoform>
</comment>
<comment type="domain">
    <text>The hydrophobic domains (HD) could mediate the membrane association of the replication complex and thereby alter the architecture of the host cell membrane.</text>
</comment>
<comment type="PTM">
    <text evidence="1">Specific enzymatic cleavages in vivo by its own proteases yield mature proteins. 3CL-PRO and PL-PRO proteinases are autocatalytically processed (By similarity).</text>
</comment>
<comment type="miscellaneous">
    <text>Isolate N1 belongs to genotype A.</text>
</comment>
<comment type="miscellaneous">
    <molecule>Isoform Replicase polyprotein 1ab</molecule>
    <text>Produced by -1 ribosomal frameshifting at the 1a-1b genes boundary.</text>
</comment>
<comment type="similarity">
    <text evidence="35">Belongs to the coronaviruses polyprotein 1ab family.</text>
</comment>
<feature type="chain" id="PRO_5000093333" description="Host translation inhibitor nsp1" evidence="2">
    <location>
        <begin position="1"/>
        <end position="222"/>
    </location>
</feature>
<feature type="chain" id="PRO_5000093334" description="Non-structural protein 2" evidence="2">
    <location>
        <begin position="223"/>
        <end position="809"/>
    </location>
</feature>
<feature type="chain" id="PRO_5000093335" description="Papain-like proteinase nsp3" evidence="2">
    <location>
        <begin position="810"/>
        <end position="2838"/>
    </location>
</feature>
<feature type="chain" id="PRO_5000093336" description="Non-structural protein 4" evidence="2">
    <location>
        <begin position="2839"/>
        <end position="3334"/>
    </location>
</feature>
<feature type="chain" id="PRO_5000093337" description="3C-like proteinase nsp5" evidence="2">
    <location>
        <begin position="3335"/>
        <end position="3637"/>
    </location>
</feature>
<feature type="chain" id="PRO_5000093338" description="Non-structural protein 6" evidence="2">
    <location>
        <begin position="3638"/>
        <end position="3924"/>
    </location>
</feature>
<feature type="chain" id="PRO_5000093339" description="Non-structural protein 7" evidence="2">
    <location>
        <begin position="3925"/>
        <end position="4016"/>
    </location>
</feature>
<feature type="chain" id="PRO_5000093340" description="Non-structural protein 8" evidence="2">
    <location>
        <begin position="4017"/>
        <end position="4210"/>
    </location>
</feature>
<feature type="chain" id="PRO_5000093341" description="Viral protein genome-linked nsp9" evidence="2">
    <location>
        <begin position="4211"/>
        <end position="4320"/>
    </location>
</feature>
<feature type="chain" id="PRO_5000093342" description="Non-structural protein 10" evidence="2">
    <location>
        <begin position="4321"/>
        <end position="4457"/>
    </location>
</feature>
<feature type="chain" id="PRO_5000093343" description="RNA-directed RNA polymerase nsp12" evidence="2">
    <location>
        <begin position="4458"/>
        <end position="5385"/>
    </location>
</feature>
<feature type="chain" id="PRO_5000093344" description="Helicase nsp13" evidence="2">
    <location>
        <begin position="5386"/>
        <end position="5988"/>
    </location>
</feature>
<feature type="chain" id="PRO_5000093345" description="Guanine-N7 methyltransferase nsp14" evidence="2">
    <location>
        <begin position="5989"/>
        <end position="6509"/>
    </location>
</feature>
<feature type="chain" id="PRO_5000093346" description="Uridylate-specific endoribonuclease nsp15" evidence="2">
    <location>
        <begin position="6510"/>
        <end position="6883"/>
    </location>
</feature>
<feature type="chain" id="PRO_5000093347" description="2'-O-methyltransferase nsp16" evidence="2">
    <location>
        <begin position="6884"/>
        <end position="7182"/>
    </location>
</feature>
<feature type="transmembrane region" description="Helical" evidence="4">
    <location>
        <begin position="2226"/>
        <end position="2246"/>
    </location>
</feature>
<feature type="transmembrane region" description="Helical" evidence="4">
    <location>
        <begin position="2287"/>
        <end position="2307"/>
    </location>
</feature>
<feature type="transmembrane region" description="Helical" evidence="4">
    <location>
        <begin position="2318"/>
        <end position="2338"/>
    </location>
</feature>
<feature type="transmembrane region" description="Helical" evidence="4">
    <location>
        <begin position="2401"/>
        <end position="2421"/>
    </location>
</feature>
<feature type="transmembrane region" description="Helical" evidence="4">
    <location>
        <begin position="2443"/>
        <end position="2463"/>
    </location>
</feature>
<feature type="transmembrane region" description="Helical" evidence="4">
    <location>
        <begin position="2844"/>
        <end position="2864"/>
    </location>
</feature>
<feature type="transmembrane region" description="Helical" evidence="4">
    <location>
        <begin position="3119"/>
        <end position="3139"/>
    </location>
</feature>
<feature type="transmembrane region" description="Helical" evidence="4">
    <location>
        <begin position="3151"/>
        <end position="3171"/>
    </location>
</feature>
<feature type="transmembrane region" description="Helical" evidence="4">
    <location>
        <begin position="3178"/>
        <end position="3198"/>
    </location>
</feature>
<feature type="transmembrane region" description="Helical" evidence="4">
    <location>
        <begin position="3203"/>
        <end position="3223"/>
    </location>
</feature>
<feature type="transmembrane region" description="Helical" evidence="4">
    <location>
        <begin position="3651"/>
        <end position="3671"/>
    </location>
</feature>
<feature type="transmembrane region" description="Helical" evidence="4">
    <location>
        <begin position="3676"/>
        <end position="3696"/>
    </location>
</feature>
<feature type="transmembrane region" description="Helical" evidence="4">
    <location>
        <begin position="3701"/>
        <end position="3721"/>
    </location>
</feature>
<feature type="transmembrane region" description="Helical" evidence="4">
    <location>
        <begin position="3744"/>
        <end position="3764"/>
    </location>
</feature>
<feature type="transmembrane region" description="Helical" evidence="4">
    <location>
        <begin position="3772"/>
        <end position="3792"/>
    </location>
</feature>
<feature type="transmembrane region" description="Helical" evidence="4">
    <location>
        <begin position="3800"/>
        <end position="3820"/>
    </location>
</feature>
<feature type="transmembrane region" description="Helical" evidence="4">
    <location>
        <begin position="3843"/>
        <end position="3863"/>
    </location>
</feature>
<feature type="domain" description="CoV Nsp1 globular" evidence="25">
    <location>
        <begin position="54"/>
        <end position="174"/>
    </location>
</feature>
<feature type="domain" description="BetaCoV Nsp1 C-terminal" evidence="26">
    <location>
        <begin position="192"/>
        <end position="222"/>
    </location>
</feature>
<feature type="domain" description="CoV Nsp2 N-terminal" evidence="27">
    <location>
        <begin position="226"/>
        <end position="488"/>
    </location>
</feature>
<feature type="domain" description="CoV Nsp2 middle" evidence="28">
    <location>
        <begin position="493"/>
        <end position="681"/>
    </location>
</feature>
<feature type="domain" description="CoV Nsp2 C-terminal" evidence="29">
    <location>
        <begin position="697"/>
        <end position="809"/>
    </location>
</feature>
<feature type="domain" description="Ubiquitin-like 1" evidence="5">
    <location>
        <begin position="811"/>
        <end position="923"/>
    </location>
</feature>
<feature type="repeat" description="1">
    <location>
        <begin position="945"/>
        <end position="954"/>
    </location>
</feature>
<feature type="repeat" description="2">
    <location>
        <begin position="955"/>
        <end position="964"/>
    </location>
</feature>
<feature type="repeat" description="3">
    <location>
        <begin position="965"/>
        <end position="974"/>
    </location>
</feature>
<feature type="repeat" description="4">
    <location>
        <begin position="975"/>
        <end position="984"/>
    </location>
</feature>
<feature type="repeat" description="5">
    <location>
        <begin position="985"/>
        <end position="994"/>
    </location>
</feature>
<feature type="repeat" description="6">
    <location>
        <begin position="995"/>
        <end position="1004"/>
    </location>
</feature>
<feature type="repeat" description="7">
    <location>
        <begin position="1005"/>
        <end position="1014"/>
    </location>
</feature>
<feature type="repeat" description="8">
    <location>
        <begin position="1015"/>
        <end position="1024"/>
    </location>
</feature>
<feature type="repeat" description="9">
    <location>
        <begin position="1025"/>
        <end position="1034"/>
    </location>
</feature>
<feature type="repeat" description="10">
    <location>
        <begin position="1035"/>
        <end position="1044"/>
    </location>
</feature>
<feature type="repeat" description="11">
    <location>
        <begin position="1045"/>
        <end position="1054"/>
    </location>
</feature>
<feature type="repeat" description="12">
    <location>
        <begin position="1055"/>
        <end position="1064"/>
    </location>
</feature>
<feature type="repeat" description="13">
    <location>
        <begin position="1065"/>
        <end position="1074"/>
    </location>
</feature>
<feature type="repeat" description="14">
    <location>
        <begin position="1075"/>
        <end position="1084"/>
    </location>
</feature>
<feature type="domain" description="Peptidase C16 1" evidence="6">
    <location>
        <begin position="1123"/>
        <end position="1373"/>
    </location>
</feature>
<feature type="domain" description="Macro" evidence="7">
    <location>
        <begin position="1351"/>
        <end position="1522"/>
    </location>
</feature>
<feature type="domain" description="DPUP" evidence="10">
    <location>
        <begin position="1578"/>
        <end position="1649"/>
    </location>
</feature>
<feature type="domain" description="Ubiquitin-like 2" evidence="5">
    <location>
        <begin position="1649"/>
        <end position="1704"/>
    </location>
</feature>
<feature type="domain" description="Peptidase C16 2" evidence="6">
    <location>
        <begin position="1718"/>
        <end position="1978"/>
    </location>
</feature>
<feature type="domain" description="Nucleic acid-binding" evidence="11">
    <location>
        <begin position="1992"/>
        <end position="2093"/>
    </location>
</feature>
<feature type="domain" description="G2M" evidence="32">
    <location>
        <begin position="2108"/>
        <end position="2257"/>
    </location>
</feature>
<feature type="domain" description="3Ecto" evidence="31">
    <location>
        <begin position="2323"/>
        <end position="2384"/>
    </location>
</feature>
<feature type="domain" description="CoV Nsp3 Y" evidence="30">
    <location>
        <begin position="2471"/>
        <end position="2838"/>
    </location>
</feature>
<feature type="domain" description="Nsp4C" evidence="12">
    <location>
        <begin position="3237"/>
        <end position="3334"/>
    </location>
</feature>
<feature type="domain" description="Peptidase C30" evidence="8">
    <location>
        <begin position="3335"/>
        <end position="3637"/>
    </location>
</feature>
<feature type="domain" description="RdRp Nsp7 cofactor" evidence="15">
    <location>
        <begin position="3925"/>
        <end position="4013"/>
    </location>
</feature>
<feature type="domain" description="RdRp Nsp8 cofactor" evidence="16">
    <location>
        <begin position="4014"/>
        <end position="4210"/>
    </location>
</feature>
<feature type="domain" description="Nsp9 ssRNA-binding" evidence="17">
    <location>
        <begin position="4211"/>
        <end position="4320"/>
    </location>
</feature>
<feature type="domain" description="ExoN/MTase coactivator" evidence="18">
    <location>
        <begin position="4321"/>
        <end position="4458"/>
    </location>
</feature>
<feature type="domain" description="NiRAN" evidence="13">
    <location>
        <begin position="4463"/>
        <end position="4718"/>
    </location>
</feature>
<feature type="domain" description="Nsp12 Interface" evidence="33">
    <location>
        <begin position="4719"/>
        <end position="4817"/>
    </location>
</feature>
<feature type="domain" description="Nsp12 RNA-dependent RNA polymerase" evidence="14">
    <location>
        <begin position="4818"/>
        <end position="5385"/>
    </location>
</feature>
<feature type="domain" description="RdRp catalytic">
    <location>
        <begin position="5065"/>
        <end position="5227"/>
    </location>
</feature>
<feature type="domain" description="CV ZBD" evidence="9">
    <location>
        <begin position="5386"/>
        <end position="5498"/>
    </location>
</feature>
<feature type="domain" description="(+)RNA virus helicase ATP-binding">
    <location>
        <begin position="5641"/>
        <end position="5822"/>
    </location>
</feature>
<feature type="domain" description="(+)RNA virus helicase C-terminal">
    <location>
        <begin position="5823"/>
        <end position="5992"/>
    </location>
</feature>
<feature type="domain" description="ExoN" evidence="19">
    <location>
        <begin position="6059"/>
        <end position="6274"/>
    </location>
</feature>
<feature type="domain" description="N7-MTase" evidence="20">
    <location>
        <begin position="6283"/>
        <end position="6509"/>
    </location>
</feature>
<feature type="domain" description="Nsp15 N-terminal oligomerization" evidence="23">
    <location>
        <begin position="6510"/>
        <end position="6570"/>
    </location>
</feature>
<feature type="domain" description="AV-Nsp11N/CoV-Nsp15M" evidence="24">
    <location>
        <begin position="6571"/>
        <end position="6691"/>
    </location>
</feature>
<feature type="domain" description="NendoU" evidence="22">
    <location>
        <begin position="6741"/>
        <end position="6880"/>
    </location>
</feature>
<feature type="domain" description="Nidovirus-type SAM-dependent 2'-O-MTase" evidence="21">
    <location>
        <begin position="6885"/>
        <end position="7179"/>
    </location>
</feature>
<feature type="zinc finger region" description="C4-type 1" evidence="6">
    <location>
        <begin position="1238"/>
        <end position="1266"/>
    </location>
</feature>
<feature type="zinc finger region" description="C4-type 2" evidence="6">
    <location>
        <begin position="1835"/>
        <end position="1871"/>
    </location>
</feature>
<feature type="zinc finger region" evidence="1">
    <location>
        <begin position="4394"/>
        <end position="4410"/>
    </location>
</feature>
<feature type="zinc finger region" evidence="1">
    <location>
        <begin position="4436"/>
        <end position="4449"/>
    </location>
</feature>
<feature type="region of interest" description="C4" evidence="27">
    <location>
        <begin position="365"/>
        <end position="389"/>
    </location>
</feature>
<feature type="region of interest" description="14 X 10 AA tandem repeat of N-[DN]-D-E-D-V-V-T-G-D">
    <location>
        <begin position="945"/>
        <end position="1084"/>
    </location>
</feature>
<feature type="region of interest" description="Disordered" evidence="34">
    <location>
        <begin position="946"/>
        <end position="1064"/>
    </location>
</feature>
<feature type="region of interest" description="HD1" evidence="1">
    <location>
        <begin position="2226"/>
        <end position="2463"/>
    </location>
</feature>
<feature type="region of interest" description="Y1" evidence="30">
    <location>
        <begin position="2471"/>
        <end position="2561"/>
    </location>
</feature>
<feature type="region of interest" description="ZF1" evidence="30">
    <location>
        <begin position="2475"/>
        <end position="2488"/>
    </location>
</feature>
<feature type="region of interest" description="ZF2" evidence="30">
    <location>
        <begin position="2521"/>
        <end position="2531"/>
    </location>
</feature>
<feature type="region of interest" description="CoV-Y" evidence="30">
    <location>
        <begin position="2562"/>
        <end position="2838"/>
    </location>
</feature>
<feature type="region of interest" description="Y2" evidence="30">
    <location>
        <begin position="2562"/>
        <end position="2654"/>
    </location>
</feature>
<feature type="region of interest" description="Y3" evidence="30">
    <location>
        <begin position="2655"/>
        <end position="2737"/>
    </location>
</feature>
<feature type="region of interest" description="Y4" evidence="30">
    <location>
        <begin position="2738"/>
        <end position="2838"/>
    </location>
</feature>
<feature type="region of interest" description="HD2" evidence="1">
    <location>
        <begin position="2844"/>
        <end position="3223"/>
    </location>
</feature>
<feature type="region of interest" description="HD3" evidence="1">
    <location>
        <begin position="3651"/>
        <end position="3863"/>
    </location>
</feature>
<feature type="region of interest" description="RdRp Fingers N-ter" evidence="14">
    <location>
        <begin position="4820"/>
        <end position="5034"/>
    </location>
</feature>
<feature type="region of interest" description="RdRp Palm N-ter" evidence="14">
    <location>
        <begin position="5035"/>
        <end position="5073"/>
    </location>
</feature>
<feature type="region of interest" description="RdRp Fingers C-ter" evidence="14">
    <location>
        <begin position="5074"/>
        <end position="5132"/>
    </location>
</feature>
<feature type="region of interest" description="RdRp Palm C-ter" evidence="14">
    <location>
        <begin position="5133"/>
        <end position="5268"/>
    </location>
</feature>
<feature type="region of interest" description="RdRp Thumb" evidence="14">
    <location>
        <begin position="5269"/>
        <end position="5385"/>
    </location>
</feature>
<feature type="region of interest" description="GpppA-binding" evidence="20">
    <location>
        <begin position="6396"/>
        <end position="6410"/>
    </location>
</feature>
<feature type="active site" description="For PL1-PRO activity" evidence="6">
    <location>
        <position position="1161"/>
    </location>
</feature>
<feature type="active site" description="For PL1-PRO activity" evidence="6">
    <location>
        <position position="1312"/>
    </location>
</feature>
<feature type="active site" description="For PL1-PRO activity" evidence="6">
    <location>
        <position position="1323"/>
    </location>
</feature>
<feature type="active site" description="For PL2-PRO activity" evidence="6">
    <location>
        <position position="1757"/>
    </location>
</feature>
<feature type="active site" description="For PL2-PRO activity" evidence="6">
    <location>
        <position position="1914"/>
    </location>
</feature>
<feature type="active site" description="For PL2-PRO activity" evidence="6">
    <location>
        <position position="1928"/>
    </location>
</feature>
<feature type="active site" description="For 3CL-PRO activity" evidence="8">
    <location>
        <position position="3375"/>
    </location>
</feature>
<feature type="active site" description="For 3CL-PRO activity" evidence="8">
    <location>
        <position position="3479"/>
    </location>
</feature>
<feature type="active site" evidence="14">
    <location>
        <position position="5212"/>
    </location>
</feature>
<feature type="active site" evidence="14">
    <location>
        <position position="5213"/>
    </location>
</feature>
<feature type="active site" evidence="14">
    <location>
        <position position="5214"/>
    </location>
</feature>
<feature type="active site" evidence="19">
    <location>
        <position position="6077"/>
    </location>
</feature>
<feature type="active site" evidence="19">
    <location>
        <position position="6079"/>
    </location>
</feature>
<feature type="active site" evidence="19">
    <location>
        <position position="6178"/>
    </location>
</feature>
<feature type="active site" evidence="19">
    <location>
        <position position="6255"/>
    </location>
</feature>
<feature type="active site" evidence="19">
    <location>
        <position position="6260"/>
    </location>
</feature>
<feature type="active site" evidence="22">
    <location>
        <position position="6771"/>
    </location>
</feature>
<feature type="active site" evidence="22">
    <location>
        <position position="6786"/>
    </location>
</feature>
<feature type="active site" evidence="22">
    <location>
        <position position="6826"/>
    </location>
</feature>
<feature type="active site" evidence="21">
    <location>
        <position position="6929"/>
    </location>
</feature>
<feature type="active site" evidence="21">
    <location>
        <position position="7013"/>
    </location>
</feature>
<feature type="active site" evidence="21">
    <location>
        <position position="7053"/>
    </location>
</feature>
<feature type="active site" evidence="21">
    <location>
        <position position="7086"/>
    </location>
</feature>
<feature type="binding site" evidence="27">
    <location>
        <position position="365"/>
    </location>
    <ligand>
        <name>Zn(2+)</name>
        <dbReference type="ChEBI" id="CHEBI:29105"/>
        <label>1</label>
    </ligand>
</feature>
<feature type="binding site" evidence="27">
    <location>
        <position position="370"/>
    </location>
    <ligand>
        <name>Zn(2+)</name>
        <dbReference type="ChEBI" id="CHEBI:29105"/>
        <label>1</label>
    </ligand>
</feature>
<feature type="binding site" evidence="27">
    <location>
        <position position="386"/>
    </location>
    <ligand>
        <name>Zn(2+)</name>
        <dbReference type="ChEBI" id="CHEBI:29105"/>
        <label>1</label>
    </ligand>
</feature>
<feature type="binding site" evidence="27">
    <location>
        <position position="389"/>
    </location>
    <ligand>
        <name>Zn(2+)</name>
        <dbReference type="ChEBI" id="CHEBI:29105"/>
        <label>1</label>
    </ligand>
</feature>
<feature type="binding site" evidence="6">
    <location>
        <position position="1238"/>
    </location>
    <ligand>
        <name>Zn(2+)</name>
        <dbReference type="ChEBI" id="CHEBI:29105"/>
        <label>2</label>
    </ligand>
</feature>
<feature type="binding site" evidence="6">
    <location>
        <position position="1241"/>
    </location>
    <ligand>
        <name>Zn(2+)</name>
        <dbReference type="ChEBI" id="CHEBI:29105"/>
        <label>2</label>
    </ligand>
</feature>
<feature type="binding site" evidence="6">
    <location>
        <position position="1264"/>
    </location>
    <ligand>
        <name>Zn(2+)</name>
        <dbReference type="ChEBI" id="CHEBI:29105"/>
        <label>2</label>
    </ligand>
</feature>
<feature type="binding site" evidence="6">
    <location>
        <position position="1266"/>
    </location>
    <ligand>
        <name>Zn(2+)</name>
        <dbReference type="ChEBI" id="CHEBI:29105"/>
        <label>2</label>
    </ligand>
</feature>
<feature type="binding site" evidence="6">
    <location>
        <position position="1835"/>
    </location>
    <ligand>
        <name>Zn(2+)</name>
        <dbReference type="ChEBI" id="CHEBI:29105"/>
        <label>3</label>
    </ligand>
</feature>
<feature type="binding site" evidence="6">
    <location>
        <position position="1837"/>
    </location>
    <ligand>
        <name>Zn(2+)</name>
        <dbReference type="ChEBI" id="CHEBI:29105"/>
        <label>3</label>
    </ligand>
</feature>
<feature type="binding site" evidence="6">
    <location>
        <position position="1869"/>
    </location>
    <ligand>
        <name>Zn(2+)</name>
        <dbReference type="ChEBI" id="CHEBI:29105"/>
        <label>3</label>
    </ligand>
</feature>
<feature type="binding site" evidence="6">
    <location>
        <position position="1871"/>
    </location>
    <ligand>
        <name>Zn(2+)</name>
        <dbReference type="ChEBI" id="CHEBI:29105"/>
        <label>3</label>
    </ligand>
</feature>
<feature type="binding site" evidence="30">
    <location>
        <position position="2475"/>
    </location>
    <ligand>
        <name>Zn(2+)</name>
        <dbReference type="ChEBI" id="CHEBI:29105"/>
        <label>4</label>
    </ligand>
</feature>
<feature type="binding site" evidence="30">
    <location>
        <position position="2480"/>
    </location>
    <ligand>
        <name>Zn(2+)</name>
        <dbReference type="ChEBI" id="CHEBI:29105"/>
        <label>4</label>
    </ligand>
</feature>
<feature type="binding site" evidence="30">
    <location>
        <position position="2485"/>
    </location>
    <ligand>
        <name>Zn(2+)</name>
        <dbReference type="ChEBI" id="CHEBI:29105"/>
        <label>4</label>
    </ligand>
</feature>
<feature type="binding site" evidence="30">
    <location>
        <position position="2488"/>
    </location>
    <ligand>
        <name>Zn(2+)</name>
        <dbReference type="ChEBI" id="CHEBI:29105"/>
        <label>4</label>
    </ligand>
</feature>
<feature type="binding site" evidence="30">
    <location>
        <position position="2521"/>
    </location>
    <ligand>
        <name>Zn(2+)</name>
        <dbReference type="ChEBI" id="CHEBI:29105"/>
        <label>5</label>
    </ligand>
</feature>
<feature type="binding site" evidence="30">
    <location>
        <position position="2524"/>
    </location>
    <ligand>
        <name>Zn(2+)</name>
        <dbReference type="ChEBI" id="CHEBI:29105"/>
        <label>5</label>
    </ligand>
</feature>
<feature type="binding site" evidence="30">
    <location>
        <position position="2528"/>
    </location>
    <ligand>
        <name>Zn(2+)</name>
        <dbReference type="ChEBI" id="CHEBI:29105"/>
        <label>5</label>
    </ligand>
</feature>
<feature type="binding site" evidence="30">
    <location>
        <position position="2531"/>
    </location>
    <ligand>
        <name>Zn(2+)</name>
        <dbReference type="ChEBI" id="CHEBI:29105"/>
        <label>5</label>
    </ligand>
</feature>
<feature type="binding site" evidence="18">
    <location>
        <position position="4394"/>
    </location>
    <ligand>
        <name>Zn(2+)</name>
        <dbReference type="ChEBI" id="CHEBI:29105"/>
        <label>6</label>
    </ligand>
</feature>
<feature type="binding site" evidence="18">
    <location>
        <position position="4397"/>
    </location>
    <ligand>
        <name>Zn(2+)</name>
        <dbReference type="ChEBI" id="CHEBI:29105"/>
        <label>6</label>
    </ligand>
</feature>
<feature type="binding site" evidence="18">
    <location>
        <position position="4403"/>
    </location>
    <ligand>
        <name>Zn(2+)</name>
        <dbReference type="ChEBI" id="CHEBI:29105"/>
        <label>6</label>
    </ligand>
</feature>
<feature type="binding site" evidence="18">
    <location>
        <position position="4410"/>
    </location>
    <ligand>
        <name>Zn(2+)</name>
        <dbReference type="ChEBI" id="CHEBI:29105"/>
        <label>6</label>
    </ligand>
</feature>
<feature type="binding site" evidence="18">
    <location>
        <position position="4436"/>
    </location>
    <ligand>
        <name>Zn(2+)</name>
        <dbReference type="ChEBI" id="CHEBI:29105"/>
        <label>7</label>
    </ligand>
</feature>
<feature type="binding site" evidence="18">
    <location>
        <position position="4439"/>
    </location>
    <ligand>
        <name>Zn(2+)</name>
        <dbReference type="ChEBI" id="CHEBI:29105"/>
        <label>7</label>
    </ligand>
</feature>
<feature type="binding site" evidence="18">
    <location>
        <position position="4447"/>
    </location>
    <ligand>
        <name>Zn(2+)</name>
        <dbReference type="ChEBI" id="CHEBI:29105"/>
        <label>7</label>
    </ligand>
</feature>
<feature type="binding site" evidence="18">
    <location>
        <position position="4449"/>
    </location>
    <ligand>
        <name>Zn(2+)</name>
        <dbReference type="ChEBI" id="CHEBI:29105"/>
        <label>7</label>
    </ligand>
</feature>
<feature type="binding site" evidence="3">
    <location>
        <position position="4666"/>
    </location>
    <ligand>
        <name>Mn(2+)</name>
        <dbReference type="ChEBI" id="CHEBI:29035"/>
    </ligand>
</feature>
<feature type="binding site" evidence="3">
    <location>
        <position position="4675"/>
    </location>
    <ligand>
        <name>Mn(2+)</name>
        <dbReference type="ChEBI" id="CHEBI:29035"/>
    </ligand>
</feature>
<feature type="binding site" evidence="33">
    <location>
        <position position="4748"/>
    </location>
    <ligand>
        <name>Zn(2+)</name>
        <dbReference type="ChEBI" id="CHEBI:29105"/>
        <label>8</label>
    </ligand>
</feature>
<feature type="binding site" evidence="33">
    <location>
        <position position="4754"/>
    </location>
    <ligand>
        <name>Zn(2+)</name>
        <dbReference type="ChEBI" id="CHEBI:29105"/>
        <label>8</label>
    </ligand>
</feature>
<feature type="binding site" evidence="33">
    <location>
        <position position="4759"/>
    </location>
    <ligand>
        <name>Zn(2+)</name>
        <dbReference type="ChEBI" id="CHEBI:29105"/>
        <label>8</label>
    </ligand>
</feature>
<feature type="binding site" evidence="33">
    <location>
        <position position="4763"/>
    </location>
    <ligand>
        <name>Zn(2+)</name>
        <dbReference type="ChEBI" id="CHEBI:29105"/>
        <label>8</label>
    </ligand>
</feature>
<feature type="binding site" evidence="14">
    <location>
        <position position="4940"/>
    </location>
    <ligand>
        <name>Zn(2+)</name>
        <dbReference type="ChEBI" id="CHEBI:29105"/>
        <label>9</label>
    </ligand>
</feature>
<feature type="binding site" evidence="14">
    <location>
        <position position="5095"/>
    </location>
    <ligand>
        <name>Zn(2+)</name>
        <dbReference type="ChEBI" id="CHEBI:29105"/>
        <label>9</label>
    </ligand>
</feature>
<feature type="binding site" evidence="14">
    <location>
        <position position="5098"/>
    </location>
    <ligand>
        <name>Zn(2+)</name>
        <dbReference type="ChEBI" id="CHEBI:29105"/>
        <label>9</label>
    </ligand>
</feature>
<feature type="binding site" evidence="14">
    <location>
        <position position="5099"/>
    </location>
    <ligand>
        <name>Zn(2+)</name>
        <dbReference type="ChEBI" id="CHEBI:29105"/>
        <label>9</label>
    </ligand>
</feature>
<feature type="binding site" evidence="9">
    <location>
        <position position="5390"/>
    </location>
    <ligand>
        <name>Zn(2+)</name>
        <dbReference type="ChEBI" id="CHEBI:29105"/>
        <label>10</label>
    </ligand>
</feature>
<feature type="binding site" evidence="9">
    <location>
        <position position="5393"/>
    </location>
    <ligand>
        <name>Zn(2+)</name>
        <dbReference type="ChEBI" id="CHEBI:29105"/>
        <label>10</label>
    </ligand>
</feature>
<feature type="binding site" evidence="9">
    <location>
        <position position="5401"/>
    </location>
    <ligand>
        <name>Zn(2+)</name>
        <dbReference type="ChEBI" id="CHEBI:29105"/>
        <label>11</label>
    </ligand>
</feature>
<feature type="binding site" evidence="9">
    <location>
        <position position="5404"/>
    </location>
    <ligand>
        <name>Zn(2+)</name>
        <dbReference type="ChEBI" id="CHEBI:29105"/>
        <label>11</label>
    </ligand>
</feature>
<feature type="binding site" evidence="9">
    <location>
        <position position="5411"/>
    </location>
    <ligand>
        <name>Zn(2+)</name>
        <dbReference type="ChEBI" id="CHEBI:29105"/>
        <label>10</label>
    </ligand>
</feature>
<feature type="binding site" evidence="9">
    <location>
        <position position="5414"/>
    </location>
    <ligand>
        <name>Zn(2+)</name>
        <dbReference type="ChEBI" id="CHEBI:29105"/>
        <label>10</label>
    </ligand>
</feature>
<feature type="binding site" evidence="9">
    <location>
        <position position="5418"/>
    </location>
    <ligand>
        <name>Zn(2+)</name>
        <dbReference type="ChEBI" id="CHEBI:29105"/>
        <label>11</label>
    </ligand>
</feature>
<feature type="binding site" evidence="9">
    <location>
        <position position="5424"/>
    </location>
    <ligand>
        <name>Zn(2+)</name>
        <dbReference type="ChEBI" id="CHEBI:29105"/>
        <label>11</label>
    </ligand>
</feature>
<feature type="binding site" evidence="9">
    <location>
        <position position="5435"/>
    </location>
    <ligand>
        <name>Zn(2+)</name>
        <dbReference type="ChEBI" id="CHEBI:29105"/>
        <label>12</label>
    </ligand>
</feature>
<feature type="binding site" evidence="9">
    <location>
        <position position="5440"/>
    </location>
    <ligand>
        <name>Zn(2+)</name>
        <dbReference type="ChEBI" id="CHEBI:29105"/>
        <label>12</label>
    </ligand>
</feature>
<feature type="binding site" evidence="9">
    <location>
        <position position="5457"/>
    </location>
    <ligand>
        <name>Zn(2+)</name>
        <dbReference type="ChEBI" id="CHEBI:29105"/>
        <label>12</label>
    </ligand>
</feature>
<feature type="binding site" evidence="9">
    <location>
        <position position="5460"/>
    </location>
    <ligand>
        <name>Zn(2+)</name>
        <dbReference type="ChEBI" id="CHEBI:29105"/>
        <label>12</label>
    </ligand>
</feature>
<feature type="binding site" evidence="1">
    <location>
        <begin position="5666"/>
        <end position="5673"/>
    </location>
    <ligand>
        <name>ATP</name>
        <dbReference type="ChEBI" id="CHEBI:30616"/>
    </ligand>
</feature>
<feature type="binding site" evidence="19">
    <location>
        <position position="6194"/>
    </location>
    <ligand>
        <name>Zn(2+)</name>
        <dbReference type="ChEBI" id="CHEBI:29105"/>
        <label>13</label>
    </ligand>
</feature>
<feature type="binding site" evidence="19">
    <location>
        <position position="6197"/>
    </location>
    <ligand>
        <name>Zn(2+)</name>
        <dbReference type="ChEBI" id="CHEBI:29105"/>
        <label>13</label>
    </ligand>
</feature>
<feature type="binding site" evidence="19">
    <location>
        <position position="6213"/>
    </location>
    <ligand>
        <name>Zn(2+)</name>
        <dbReference type="ChEBI" id="CHEBI:29105"/>
        <label>13</label>
    </ligand>
</feature>
<feature type="binding site" evidence="19">
    <location>
        <position position="6216"/>
    </location>
    <ligand>
        <name>Zn(2+)</name>
        <dbReference type="ChEBI" id="CHEBI:29105"/>
        <label>13</label>
    </ligand>
</feature>
<feature type="binding site" evidence="19">
    <location>
        <position position="6244"/>
    </location>
    <ligand>
        <name>Zn(2+)</name>
        <dbReference type="ChEBI" id="CHEBI:29105"/>
        <label>14</label>
    </ligand>
</feature>
<feature type="binding site" evidence="19">
    <location>
        <position position="6248"/>
    </location>
    <ligand>
        <name>Zn(2+)</name>
        <dbReference type="ChEBI" id="CHEBI:29105"/>
        <label>14</label>
    </ligand>
</feature>
<feature type="binding site" evidence="19">
    <location>
        <position position="6251"/>
    </location>
    <ligand>
        <name>Zn(2+)</name>
        <dbReference type="ChEBI" id="CHEBI:29105"/>
        <label>14</label>
    </ligand>
</feature>
<feature type="binding site" evidence="19">
    <location>
        <position position="6266"/>
    </location>
    <ligand>
        <name>Zn(2+)</name>
        <dbReference type="ChEBI" id="CHEBI:29105"/>
        <label>14</label>
    </ligand>
</feature>
<feature type="binding site" evidence="20">
    <location>
        <begin position="6318"/>
        <end position="6324"/>
    </location>
    <ligand>
        <name>S-adenosyl-L-methionine</name>
        <dbReference type="ChEBI" id="CHEBI:59789"/>
    </ligand>
</feature>
<feature type="binding site" evidence="20">
    <location>
        <position position="6434"/>
    </location>
    <ligand>
        <name>Zn(2+)</name>
        <dbReference type="ChEBI" id="CHEBI:29105"/>
        <label>15</label>
    </ligand>
</feature>
<feature type="binding site" evidence="20">
    <location>
        <position position="6455"/>
    </location>
    <ligand>
        <name>Zn(2+)</name>
        <dbReference type="ChEBI" id="CHEBI:29105"/>
        <label>15</label>
    </ligand>
</feature>
<feature type="binding site" evidence="20">
    <location>
        <position position="6466"/>
    </location>
    <ligand>
        <name>Zn(2+)</name>
        <dbReference type="ChEBI" id="CHEBI:29105"/>
        <label>15</label>
    </ligand>
</feature>
<feature type="binding site" evidence="20">
    <location>
        <position position="6469"/>
    </location>
    <ligand>
        <name>Zn(2+)</name>
        <dbReference type="ChEBI" id="CHEBI:29105"/>
        <label>15</label>
    </ligand>
</feature>
<feature type="site" description="Cleavage; by PL1-PRO" evidence="1">
    <location>
        <begin position="222"/>
        <end position="223"/>
    </location>
</feature>
<feature type="site" description="Cleavage; by PL1-PRO" evidence="1">
    <location>
        <begin position="809"/>
        <end position="810"/>
    </location>
</feature>
<feature type="site" description="Cleavage; by PL2-PRO" evidence="1">
    <location>
        <begin position="2838"/>
        <end position="2839"/>
    </location>
</feature>
<feature type="site" description="Cleavage; by 3CL-PRO" evidence="1">
    <location>
        <begin position="3334"/>
        <end position="3335"/>
    </location>
</feature>
<feature type="site" description="Cleavage; by 3CL-PRO" evidence="1">
    <location>
        <begin position="3637"/>
        <end position="3638"/>
    </location>
</feature>
<feature type="site" description="Cleavage; by 3CL-PRO" evidence="1">
    <location>
        <begin position="3924"/>
        <end position="3925"/>
    </location>
</feature>
<feature type="site" description="Cleavage; by 3CL-PRO" evidence="1">
    <location>
        <begin position="4016"/>
        <end position="4017"/>
    </location>
</feature>
<feature type="site" description="Cleavage; by 3CL-PRO" evidence="1">
    <location>
        <begin position="4210"/>
        <end position="4211"/>
    </location>
</feature>
<feature type="site" description="Cleavage; by 3CL-PRO" evidence="1">
    <location>
        <begin position="4320"/>
        <end position="4321"/>
    </location>
</feature>
<feature type="site" description="Cleavage; by 3CL-PRO" evidence="1">
    <location>
        <begin position="4457"/>
        <end position="4458"/>
    </location>
</feature>
<feature type="site" description="Cleavage; by 3CL-PRO" evidence="1">
    <location>
        <begin position="5385"/>
        <end position="5386"/>
    </location>
</feature>
<feature type="site" description="Cleavage; by 3CL-PRO" evidence="1">
    <location>
        <begin position="6509"/>
        <end position="6510"/>
    </location>
</feature>
<feature type="site" description="Cleavage; by 3CL-PRO" evidence="1">
    <location>
        <begin position="6883"/>
        <end position="6884"/>
    </location>
</feature>
<feature type="disulfide bond" evidence="31">
    <location>
        <begin position="2339"/>
        <end position="2363"/>
    </location>
</feature>
<feature type="disulfide bond" evidence="31">
    <location>
        <begin position="2354"/>
        <end position="2360"/>
    </location>
</feature>
<organism>
    <name type="scientific">Human coronavirus HKU1 (isolate N1)</name>
    <name type="common">HCoV-HKU1</name>
    <dbReference type="NCBI Taxonomy" id="443239"/>
    <lineage>
        <taxon>Viruses</taxon>
        <taxon>Riboviria</taxon>
        <taxon>Orthornavirae</taxon>
        <taxon>Pisuviricota</taxon>
        <taxon>Pisoniviricetes</taxon>
        <taxon>Nidovirales</taxon>
        <taxon>Cornidovirineae</taxon>
        <taxon>Coronaviridae</taxon>
        <taxon>Orthocoronavirinae</taxon>
        <taxon>Betacoronavirus</taxon>
        <taxon>Embecovirus</taxon>
        <taxon>Human coronavirus HKU1</taxon>
    </lineage>
</organism>
<name>R1AB_CVHN1</name>
<keyword id="KW-1072">Activation of host autophagy by virus</keyword>
<keyword id="KW-0067">ATP-binding</keyword>
<keyword id="KW-1132">Decay of host mRNAs by virus</keyword>
<keyword id="KW-1015">Disulfide bond</keyword>
<keyword id="KW-0255">Endonuclease</keyword>
<keyword id="KW-1262">Eukaryotic host gene expression shutoff by virus</keyword>
<keyword id="KW-1193">Eukaryotic host translation shutoff by virus</keyword>
<keyword id="KW-0269">Exonuclease</keyword>
<keyword id="KW-0347">Helicase</keyword>
<keyword id="KW-1035">Host cytoplasm</keyword>
<keyword id="KW-1190">Host gene expression shutoff by virus</keyword>
<keyword id="KW-1043">Host membrane</keyword>
<keyword id="KW-1192">Host mRNA suppression by virus</keyword>
<keyword id="KW-0945">Host-virus interaction</keyword>
<keyword id="KW-0378">Hydrolase</keyword>
<keyword id="KW-1090">Inhibition of host innate immune response by virus</keyword>
<keyword id="KW-1114">Inhibition of host interferon signaling pathway by virus</keyword>
<keyword id="KW-1095">Inhibition of host ISG15 by virus</keyword>
<keyword id="KW-1100">Inhibition of host NF-kappa-B by virus</keyword>
<keyword id="KW-0922">Interferon antiviral system evasion</keyword>
<keyword id="KW-0456">Lyase</keyword>
<keyword id="KW-0464">Manganese</keyword>
<keyword id="KW-0472">Membrane</keyword>
<keyword id="KW-0479">Metal-binding</keyword>
<keyword id="KW-0489">Methyltransferase</keyword>
<keyword id="KW-1127">Modulation of host ubiquitin pathway by viral deubiquitinase</keyword>
<keyword id="KW-1130">Modulation of host ubiquitin pathway by virus</keyword>
<keyword id="KW-0540">Nuclease</keyword>
<keyword id="KW-0547">Nucleotide-binding</keyword>
<keyword id="KW-0548">Nucleotidyltransferase</keyword>
<keyword id="KW-0645">Protease</keyword>
<keyword id="KW-0677">Repeat</keyword>
<keyword id="KW-0688">Ribosomal frameshifting</keyword>
<keyword id="KW-0694">RNA-binding</keyword>
<keyword id="KW-0696">RNA-directed RNA polymerase</keyword>
<keyword id="KW-0788">Thiol protease</keyword>
<keyword id="KW-0808">Transferase</keyword>
<keyword id="KW-0812">Transmembrane</keyword>
<keyword id="KW-1133">Transmembrane helix</keyword>
<keyword id="KW-0833">Ubl conjugation pathway</keyword>
<keyword id="KW-0899">Viral immunoevasion</keyword>
<keyword id="KW-0693">Viral RNA replication</keyword>
<keyword id="KW-0862">Zinc</keyword>
<keyword id="KW-0863">Zinc-finger</keyword>
<sequence length="7182" mass="810941">MIKTSKYGLGFKWAPEFRWLLPDAAEELASPMKSDEGGLCPSTGQAMESVGFVYDNHVKIDCRCILGQEWHVQSNLIRDIFVHEDLHVVEVLTKTAVKSGTAILIKSPLHSLGGFPKGYVMGLFRSYKTKRYVVHHLSMTTSTTNFGEDFLGWIVPFGFMPSYVHKWFQFCRLYIEESDLIISNFKFDDYDFSVEDAYAEVHAEPKGKYSQKAYALLRQYRGIKPVLFVDQYGCDYSGKLADCLQAYGHYSLQDMRQKQSVWLANCDFDIVVAWHVVRDSRFVMRLQTIATICGIKYVAQPTEDVVDGDVVIREPVHLLSADAIVLKLPSLMKVMTHMDDFSIKSIYNVDLCDCGFVMQYGYVDCFNDNCDFYGWVSGNMMDGFSCPLCCTVYDSSEVKAQSSGVIPENPVLFTNSTDTVNHDSFNLYGYSVTPFGSCIYWSPRPGLWIPIIKSSVKSYDDLVYSGVVGCKSIVKETALITHALYLDYVQCKCGNLEQNHILGVNNSWCRQLLLNRGDYNMLLKNIDLFVKRRADFACKFAVCGDGFVPFLLDGLIPRSYYLIQSGIFFTSLMSQFSQEVSDMCLKMCILFMDRVSVATFYIEHYVNRLVTQFKLLGTTLVNKMVNWFNTMLDASAPATGWLLYQLLNGLFVVSQANFNFVALIPDYAKILVNKFYTFFKLLLECVTVDVLKDMPVLKTINGLVCIVGNKFYNVSTGLIPGFVLPCNAQEQQIYFFEGVAESVIVEDDVIENVKSSLSSYEYCQPPKSVEKICIIDNMYMGKCGDKFFPIVMNDKNICLLDQAWRFPCAGRKVNFNEKPVVMEIPSLMTVKVMFDLDSTFDDILGKVCSEFEVEKGVTVDDFVAVVCDAIENALNSCKEHPVVGYQVRAFLNKLNENVVYLFDEAGDEAMASRMYCTFAIEDVEDVISSEAVEDTIDGVVEDTINDDEDVVTGDNDDEDVVTGDNDDEDVVTGDNDDEDVVTGDNDDEDVVTGDNDDEDVVTGDNDDEDVVTGDNDDEDVVTGDNDDEDVVTGDNDDEDVVTGDNDDEDVVTGDNDDEDVVTGDNDDEDVVTGDNDDEDVVTGDNNDEEIVTGDNDDQIVVTGDDVDDIESIYDFDTYKALLVFNDVYNDALFVSYGSSVETETYFKVNGLWSPTITHTNCWLRSVLLVMQKLPFKFKDLAIENMWLSYKVGYNQSFVDYLLTTIPKAIVLPQGGFVADFAYWFLNQFDINAYANWCCLKCGFSFDLNGLDALFFYGDIVSHVCKCGHNMTLIAADLPCTLHFSLFDDNFCAFCTPKKIFIAACAVDVNVCHSVAVIGDEQIDGKFVTKFSGDKFDFIVGYGMSFSMSSFELPQLYGLCITPNVCFVKGDIINVARLVKADVIVNPANGHMLHGGGVAKAIAVAAGKKFSKETAAMVKSKGVCQVGDCYVSTGGKLCKTILNIVGPDARQDGRQSYVLLARAYKHLNNYDCCLSTLISAGIFSVPADVSLTYLLGVVDKQVILVSNNKEDFDIIQKCQITSVVGTKALAVRLTANVGRVIKFETDAYKLFLSGDDCFVSNSSVIQEVLLLRHDIQLNNDVRDYLLSKMTSLPKDWRLINKFDVINGVKTVKYFECPNSIYICSQGKDFGYVCDGSFYKATVNQVCVLLAKKIDVLLTVDGVNFKSISLTVGEVFGKILGNVFCDGIDVTKLKCSDFYADKILYQYENLSLADISAVQSSFGFDQQQLLAYYNFLTVCKWSVVVNGPFFSFEQSHNNCYVNVACLMLQHINLKFNKWQWQEAWYEFRAGRPHRLVALVLAKGHFKFDEPSDATDFIRVVLKQADLSGAICELELICDCGIKQESRVGVDAVMHFGTLAKTDLFNGYKIGCNCAGRIVHCTKLNVPFLICSNTPLSKDLPDDVVAANMFMGVGVGHYTHLKCGSPYQHYDACSVKKYTGVSGCLTDCLYLKNLTQTFTSMLTNYFLDDVEMVAYNPDLSQYYCDNGKYYTKPIIKAQFKPFAKVDGVYTNFKLVGHDICAQLNDKLGFNVDLPFVEYKVTVWPVATGDVVLASDDLYVKRYFKGCETFGKPVIWFCHDEASLNSLTYFNKPSFKSENRYSVLSVDSVSEESQGNVVTSVMESQISTKEVKLKGVRKTVKIEDAIIVNDENSSIKVVKSLSLVDVWDMYLTGCDYVVWVANELSRLVKSPTVREYIRYGIKPITIPIDLLCLRDDNQTLLVPKIFKARAIEFYGFLKWLFIYVFSLLHFTNDKTIFYTTEIASKFTFNLFCLALKNAFQTFRWSIFIKGFLVVATVFLFWFNFLYINVIFSDFYLPNISVFPIFVGRIVMWIKATFGLVTICDFYSKLGVGFTSHFCNGSFICELCHSGFDMLDTYAAIDFVQYEVDRRVLFDYVSLVKLIVELVIGYSLYTVWFYPLFCLIGLQLFTTWLPDLFMLETMHWLIRFIVFVANMLPAFVLLRFYIVVTAMYKVVGFIRHIVYGCNKAGCLFCYKRNCSVRVKCSTIVGGVIRYYDITANGGTGFCVKHQWNCFNCHSFKPGNTFITVEAAIELSKELKRPVNPTDASHYVVTDIKQVGCMMRLFYDRDGQRVYDDVDASLFVDINNLLHSKVKVVPNLYVVVVESDADRANFLNAVVFYAQSLYRPILLVDKKLITTACNGISVTQTMFDVYVDTFMSHFDVDRKSFNNFVNIAHASLREGVQLEKVLDTFVGCVRKCCSIDSDVETRFITKSMISAVAAGLEFTDENYNNLVPTYLKSDNIVAADLGVLIQNGAKHVQGNVAKAANISCIWFIDAFNQLTADLQHKLKKACVKTGLKLKLTFNKQEASVPILTTPFSLKGGVVLSNLLYILFFVSLICFILLWALLPTYSVYKSDIHLPAYASFKVIDNGVVRDISVNDLCFANKFFQFDQWYESTFGSVYYHNSMDCPIVVAVMDEDIGSTMFNVPTKVLRHGFHVLHFLTYAFASDSVQCYTPHIQISYNDFYASGCVLSSLCTMFKRGDGTPHPYCYSDGVMKNASLYTSLVPHTRYSLANSNGFIRFPDVISEGIVRIVRTRSMTYCRVGACEYAEEGICFNFNSSWVLNNDYYRSMPGTFCGRDLFDLFYQFFSSLIRPIDFFSLTASSIFGAILAIVVVLVFYYLIKLKRAFGDYTSVVVINVVVWCINFLMLFVFQVYPICACVYACFYFYVTLYFPSEISVIMHLQWIVMYGAIMPFWFCVTYVAMVIANHVLWLFSYCRKIGVNVCSDSTFEETSLTTFMITKDSYCRLKNSVSDVAYNRYLSLYNKYRYYSGKMDTAAYREAACSQLAKAMETFNHNNGNDVLYQPPTASVSTSFLQSGIVKMVSPTSKIEPCIVSVTYGSMTLNGLWLDDKVYCPRHVICSSSNMNEPDYSALLCRVTLGDFTIMSGRMSLTVVSYQMQGCQLVLTVSLQNPYTPKYTFGNVKPGETFTVLAAYNGRPQGAFHVTMRSSYTIKGSFLCGSCGSVGYVLTGDSVKFVYMHQLELSTGCHTGTDFTGNFYGPYRDAQVVQLPVKDYVQTVNVIAWLYAAILNNCAWFVQNDVCSTEDFNVWAMANGFSQVKADLVLDALASMTGVSIETLLAAIKRLYMGFQGRQILGSCTFEDELAPSDVYQQLAGVKLQSKTKRFIKETIYWILISTFLFSCIISAFVKWTIFMYINTHMIGVTLCVLCFVSFMMLLVKHKHFYLTMYIIPVLCTLFYVNYLVVYKEGFRGFTYVWLSYFVPAVNFTYVYEVFYGCILCVFAIFITMHSINHDIFSLMFLVGRIVTLISMWYFGSNLEEDVLLFITAFLGTYTWTTILSLAIAKIVANWLSVNIFYFTDVPYIKLILLSYLFIGYILSCYWGFFSLLNSVFRMPMGVYNYKISVQELRYMNANGLRPPRNSFEAILLNLKLLGIGGVPVIEVSQIQSKLTDVKCANVVLLNCLQHLHVASNSKLWQYCSVLHNEILSTSDLSVAFDKLAQLLIVLFANPAAVDTKCLASIDEVSDDYVQDSTVLQALQSEFVNMASFVEYEVAKKNLADAKNSGSVNQQQIKQLEKACNIAKSVYERDKAVARKLERMADLALTNMYKEARINDKKSKVVSALQTMLFSMVRKLDNQALNSILDNAVKGCVPLSAIPALAANTLTIVIPDKQVFDKVVDNVYVTYAGSVWHIQTVQDADGINKQLTDISVDSNWPLVIIANRYNEVANAVMQNNELMPHKLKIQVVNSGSDMNCNIPTQCYYNNGSSGRIVYAVLSDVDGLKYTKIMKDDGNCVVLELDPPCKFSIQDVKGLKIKYLYFIKGCNTLARGWVVGTLSSTIRLQAGVATEYAANSSILSLCAFSVDPKKTYLDYIQQGGVPIINCVKMLCDHAGTGMAITIKPEATINQDSYGGASVCIYCRARVEHPDVDGICKLRGKFVQVPLGIKDPILYVLTHDVCQVCGFWRDGSCSCVGSSVAVQSKDLNFLNRVRGTSVNARLVPCASGLSTDVQLRAFDICNTNRAGIGLYYKVNCCRFQRIDDDGNKLDKFFVVKRTNLEVYNKEKTYYELTKSCGVVAEHDFFTFDIDGSRVPHIVRRNLSKYTMLDLCYALRHFDRNDCSILCEILCEYADCKESYFSKKDWYDFVENPDIINIYKKLGPIFNRALLNTVIFADTLVEVGLVGVLTLDNQDLYGQWYDFGDFIQTAPGFGVAVADSYYSYMMPMLTMCHVLDCELFVNDSYRQFDLVQYDFTDYKLELFNKYFKYWGMKYHPNTVDCDNDRCIIHCANFNILFSMVLPNTCFGPLVRQIFVDGVPFVVSIGYHYKELGVVMNLDVDTHRYRLSLKDLLLYAADPAMHVASASALLDLRTCCFSVAAITSGIKFQTVKPGNFNQDFYEFVKSKGLFKEGSTVDLKHFFFTQDGNAAITDYNYYKYNLPTMVDIKQLLFVLEVVYKYFEIYDGGCIPASQVIVNNYDKSAGYPFNKFGKARLYYEALSFEEQNEIYAYTKRNVLPTLTQMNLKYAISAKNRARTVAGVSILSTMTGRMFHQKCLKSIAATRGVPVVIGTTKFYGGWDDMLRHLIKDVDNPVLMGWDYPKCDRAMPNILRIVSSLVLARKHEFCCSHGDRFYRLANECAQVLSEIVMCGGCYYVKPGGTSSGDATTAFANSVFNICQAVTANVCSLMACNGHKIEDLSIRNLQKRLYSNVYRTDYVDYTFVNEYYEFLCKHFSMMILSDDGVVCYNSDYASKGYIANISVFQQVLYYQNNVFMSESKCWVENDITNGPHEFCSQHTMLVKIDGDYVYLPYPDPSRILGAGCFVDDLLKTDSVLLIERFVSLAIDAYPLVHHENEEYQKVFRVYLEYIKKLYNDLGTQILDSYSVILSTCDGLKFTEESFYKNMYLKSAVMQSVGACVVCSSQTSLRCGSCIRKPLLCCKCCYDHVMATNHKYVLSVSPYVCNAPNCDVSDVTKLYLGGMSYYCENHKPHYSFKLVMNGMVFGLYKQSCTGSPYIDDFNKIASCKWTEVDDYVLANECIERLKLFAAETQKATEEAFKQSYASATIQEIVSDREVILCWETGKVKPPLNKNYVFTGYHFTSTGKTVLGEYVFDKSELTNGVYYRATTTYKLSIGDVFVLTSHSVASLSAPTLVPQENYASIRFSSVYSVPLVFQNNVANYQHIGMKRYCTVQGPPGTGKSHLAIGLAVYYYTARVVYTAASHAAVDALCEKAYKFLNINDCTRIIPAKVRVDCYDKFKINDTTCKYVFTTINALPELVTDIVVVDEVSMLTNYELSVINARIKAKHYVYIGDPAQLPAPRVLLSKGSLEPRHFNSITKIMCCLGPDIFLGNCYRCPKEIVETVSALVYDNKLKAKNDNSSLCFKVYFKGQTTHESSSAVNIQQIYLISKFLKANPVWNSAVFISPYNSQNYVAKRVLGVQTQTVDSAQGSEYDYVIYSQTAETAHSVNVNRFNVAITRAKKGIFCVMSNMQLFESLNFITLPLDKIQNQTLPRLHCTTNLFKDCSKSCLGYHPAHAPSFLAVDDKYKVNENLAVNLNICEPVLTYSRLISLMGFKLDLTLDGYSKLFITKDEAIKRVRGWVGFDVEGAHATRENIGTNFPLQIGFSTGVDFVVEATGLFAERDCYTFKKTVAKAPPGEKFKHLIPLMSKGQKWDIVRIRIVQMLSDYLLDLSDSVVFITWSASFELTCLRYFAKLGRELNCNVCSNRATCYNSRTGYYGCWRHSYTCDYVYNPLIVDIQQWGYTGSLTSNHDIICNVHKGAHVASADAIMTRCLAIYDCFCKSVNWNLEYPIISNEVSINTSCRLLQRVMLKAAMLCNRYNLCYDIGNPKGLACVKDYEFKFYDAFPVAKSVKQLFYVYDVHKDNFKDGLCMFWNCNVDKYPSNSIVCRFDTRVLNKLNLPGCNGGSLYVNKHAFHTNPFTRTVFENLKPMPFFYYSDTPCVYVDGLESKQVDYVPLRSATCITRCNLGGAVCSKHAEEYCNYLESYNIVTTAGFTFWVYKNFDFYNLWNTFTTLQSLENVIYNLVNVGHYDGRTGELPCAIMNDKVVVKINNVDTVIFKNNTSFPTNIAVELFTKRSIRHHPELKILRNLNIDICWKHVLWDYVKDSLFCSSTYGVCKYTDLKFIENLNILFDGRDTGALEAFRKARNGVFISTEKLSRLSMIKGPQRADLNGVIVDKVGELKVEFWFAMRKDGDDVIFSRTDSLCSSHYWSPQGNLGGNCAGNVIGNDALTRFTIFTQSRVLSSFEPRSDLERDFIDMDDNLFIAKYGLEDYAFDHIVYGSFNHKVIGGLHLLIGLFRRKKKSNLLIQEFLQYDSSIHSYFITDQECGSSKSVCTVIDLLLDDFVSIVKSLNLSCVSKVVNINVDFKDFQFMLWCNDNKIMTFYPKMQATNDWKPGYSMPVLYKYLNVPLERVSLWNYGKPINLPTGCMMNVAKYTQLCQYLNTTTLAVPVNMRVLHLGAGSDKEVAPGSAVLRQWLPSGSILVDNDLNPFVSDSLVTYFGDCMTLPFDCHWDLIISDMYDPLTKNIGDYNVSKDGFFTYICHLIRDKLSLGGSVAIKITEFSWNADLYKLMSCFAFWTVFCTNVNASSSEGFLIGINYLGKSSFEIDGNVMHANYLFWRNSTTWNGGAYSLFDMTKFSLKLAGTAVVNLRPDQLNDLVYSLIERGKLLVRDTRKEIFVGDSLVNTC</sequence>
<accession>P0C6X2</accession>
<accession>Q5MQD2</accession>
<protein>
    <recommendedName>
        <fullName>Replicase polyprotein 1ab</fullName>
        <shortName>pp1ab</shortName>
    </recommendedName>
    <alternativeName>
        <fullName>ORF1ab polyprotein</fullName>
    </alternativeName>
    <component>
        <recommendedName>
            <fullName>Host translation inhibitor nsp1</fullName>
            <shortName>nsp1</shortName>
        </recommendedName>
        <alternativeName>
            <fullName>p28</fullName>
        </alternativeName>
    </component>
    <component>
        <recommendedName>
            <fullName>Non-structural protein 2</fullName>
            <shortName>nsp2</shortName>
        </recommendedName>
        <alternativeName>
            <fullName>p65</fullName>
        </alternativeName>
    </component>
    <component>
        <recommendedName>
            <fullName>Papain-like proteinase nsp3</fullName>
            <shortName>PL-PRO</shortName>
            <ecNumber>3.4.19.12</ecNumber>
            <ecNumber>3.4.22.-</ecNumber>
        </recommendedName>
        <alternativeName>
            <fullName>Non-structural protein 3</fullName>
            <shortName>nsp3</shortName>
        </alternativeName>
        <alternativeName>
            <fullName>p210</fullName>
        </alternativeName>
    </component>
    <component>
        <recommendedName>
            <fullName>Non-structural protein 4</fullName>
            <shortName>nsp4</shortName>
        </recommendedName>
        <alternativeName>
            <fullName>Peptide HD2</fullName>
        </alternativeName>
        <alternativeName>
            <fullName>p44</fullName>
        </alternativeName>
    </component>
    <component>
        <recommendedName>
            <fullName>3C-like proteinase nsp5</fullName>
            <shortName>3CL-PRO</shortName>
            <shortName>3CLp</shortName>
            <ecNumber>3.4.22.-</ecNumber>
        </recommendedName>
        <alternativeName>
            <fullName>M-PRO</fullName>
        </alternativeName>
        <alternativeName>
            <fullName>nsp5</fullName>
        </alternativeName>
        <alternativeName>
            <fullName>p27</fullName>
        </alternativeName>
    </component>
    <component>
        <recommendedName>
            <fullName>Non-structural protein 6</fullName>
            <shortName>nsp6</shortName>
        </recommendedName>
    </component>
    <component>
        <recommendedName>
            <fullName>Non-structural protein 7</fullName>
            <shortName>nsp7</shortName>
        </recommendedName>
        <alternativeName>
            <fullName>p10</fullName>
        </alternativeName>
    </component>
    <component>
        <recommendedName>
            <fullName>Non-structural protein 8</fullName>
            <shortName>nsp8</shortName>
        </recommendedName>
        <alternativeName>
            <fullName>p22</fullName>
        </alternativeName>
    </component>
    <component>
        <recommendedName>
            <fullName>Viral protein genome-linked nsp9</fullName>
        </recommendedName>
        <alternativeName>
            <fullName>Non-structural protein 9</fullName>
            <shortName>nsp9</shortName>
        </alternativeName>
        <alternativeName>
            <fullName>RNA-capping enzyme subunit nsp9</fullName>
        </alternativeName>
        <alternativeName>
            <fullName>p12</fullName>
        </alternativeName>
    </component>
    <component>
        <recommendedName>
            <fullName>Non-structural protein 10</fullName>
            <shortName>nsp10</shortName>
        </recommendedName>
        <alternativeName>
            <fullName>Growth factor-like peptide</fullName>
            <shortName>GFL</shortName>
        </alternativeName>
        <alternativeName>
            <fullName>p15</fullName>
        </alternativeName>
    </component>
    <component>
        <recommendedName>
            <fullName>RNA-directed RNA polymerase nsp12</fullName>
            <shortName>Pol</shortName>
            <shortName>RdRp</shortName>
            <ecNumber>2.7.7.48</ecNumber>
            <ecNumber>2.7.7.50</ecNumber>
        </recommendedName>
        <alternativeName>
            <fullName>nsp12</fullName>
        </alternativeName>
        <alternativeName>
            <fullName>p100</fullName>
        </alternativeName>
    </component>
    <component>
        <recommendedName>
            <fullName>Helicase nsp13</fullName>
            <shortName>Hel</shortName>
            <ecNumber>3.6.4.12</ecNumber>
            <ecNumber>3.6.4.13</ecNumber>
        </recommendedName>
        <alternativeName>
            <fullName>nsp13</fullName>
        </alternativeName>
        <alternativeName>
            <fullName>p67</fullName>
        </alternativeName>
    </component>
    <component>
        <recommendedName>
            <fullName>Guanine-N7 methyltransferase nsp14</fullName>
            <shortName>ExoN</shortName>
            <ecNumber>2.1.1.56</ecNumber>
            <ecNumber>3.1.13.-</ecNumber>
        </recommendedName>
        <alternativeName>
            <fullName>nsp14</fullName>
        </alternativeName>
    </component>
    <component>
        <recommendedName>
            <fullName>Uridylate-specific endoribonuclease nsp15</fullName>
            <ecNumber>4.6.1.-</ecNumber>
        </recommendedName>
        <alternativeName>
            <fullName>NendoU</fullName>
        </alternativeName>
        <alternativeName>
            <fullName>nsp15</fullName>
        </alternativeName>
        <alternativeName>
            <fullName>p35</fullName>
        </alternativeName>
    </component>
    <component>
        <recommendedName>
            <fullName>2'-O-methyltransferase nsp16</fullName>
            <ecNumber>2.1.1.57</ecNumber>
        </recommendedName>
        <alternativeName>
            <fullName>nsp16</fullName>
        </alternativeName>
    </component>
</protein>
<evidence type="ECO:0000250" key="1"/>
<evidence type="ECO:0000250" key="2">
    <source>
        <dbReference type="UniProtKB" id="P0C6X7"/>
    </source>
</evidence>
<evidence type="ECO:0000250" key="3">
    <source>
        <dbReference type="UniProtKB" id="P0DTD1"/>
    </source>
</evidence>
<evidence type="ECO:0000255" key="4"/>
<evidence type="ECO:0000255" key="5">
    <source>
        <dbReference type="PROSITE-ProRule" id="PRU00214"/>
    </source>
</evidence>
<evidence type="ECO:0000255" key="6">
    <source>
        <dbReference type="PROSITE-ProRule" id="PRU00444"/>
    </source>
</evidence>
<evidence type="ECO:0000255" key="7">
    <source>
        <dbReference type="PROSITE-ProRule" id="PRU00490"/>
    </source>
</evidence>
<evidence type="ECO:0000255" key="8">
    <source>
        <dbReference type="PROSITE-ProRule" id="PRU00772"/>
    </source>
</evidence>
<evidence type="ECO:0000255" key="9">
    <source>
        <dbReference type="PROSITE-ProRule" id="PRU00986"/>
    </source>
</evidence>
<evidence type="ECO:0000255" key="10">
    <source>
        <dbReference type="PROSITE-ProRule" id="PRU01289"/>
    </source>
</evidence>
<evidence type="ECO:0000255" key="11">
    <source>
        <dbReference type="PROSITE-ProRule" id="PRU01290"/>
    </source>
</evidence>
<evidence type="ECO:0000255" key="12">
    <source>
        <dbReference type="PROSITE-ProRule" id="PRU01291"/>
    </source>
</evidence>
<evidence type="ECO:0000255" key="13">
    <source>
        <dbReference type="PROSITE-ProRule" id="PRU01292"/>
    </source>
</evidence>
<evidence type="ECO:0000255" key="14">
    <source>
        <dbReference type="PROSITE-ProRule" id="PRU01293"/>
    </source>
</evidence>
<evidence type="ECO:0000255" key="15">
    <source>
        <dbReference type="PROSITE-ProRule" id="PRU01294"/>
    </source>
</evidence>
<evidence type="ECO:0000255" key="16">
    <source>
        <dbReference type="PROSITE-ProRule" id="PRU01295"/>
    </source>
</evidence>
<evidence type="ECO:0000255" key="17">
    <source>
        <dbReference type="PROSITE-ProRule" id="PRU01296"/>
    </source>
</evidence>
<evidence type="ECO:0000255" key="18">
    <source>
        <dbReference type="PROSITE-ProRule" id="PRU01297"/>
    </source>
</evidence>
<evidence type="ECO:0000255" key="19">
    <source>
        <dbReference type="PROSITE-ProRule" id="PRU01298"/>
    </source>
</evidence>
<evidence type="ECO:0000255" key="20">
    <source>
        <dbReference type="PROSITE-ProRule" id="PRU01299"/>
    </source>
</evidence>
<evidence type="ECO:0000255" key="21">
    <source>
        <dbReference type="PROSITE-ProRule" id="PRU01300"/>
    </source>
</evidence>
<evidence type="ECO:0000255" key="22">
    <source>
        <dbReference type="PROSITE-ProRule" id="PRU01303"/>
    </source>
</evidence>
<evidence type="ECO:0000255" key="23">
    <source>
        <dbReference type="PROSITE-ProRule" id="PRU01305"/>
    </source>
</evidence>
<evidence type="ECO:0000255" key="24">
    <source>
        <dbReference type="PROSITE-ProRule" id="PRU01306"/>
    </source>
</evidence>
<evidence type="ECO:0000255" key="25">
    <source>
        <dbReference type="PROSITE-ProRule" id="PRU01307"/>
    </source>
</evidence>
<evidence type="ECO:0000255" key="26">
    <source>
        <dbReference type="PROSITE-ProRule" id="PRU01308"/>
    </source>
</evidence>
<evidence type="ECO:0000255" key="27">
    <source>
        <dbReference type="PROSITE-ProRule" id="PRU01333"/>
    </source>
</evidence>
<evidence type="ECO:0000255" key="28">
    <source>
        <dbReference type="PROSITE-ProRule" id="PRU01334"/>
    </source>
</evidence>
<evidence type="ECO:0000255" key="29">
    <source>
        <dbReference type="PROSITE-ProRule" id="PRU01335"/>
    </source>
</evidence>
<evidence type="ECO:0000255" key="30">
    <source>
        <dbReference type="PROSITE-ProRule" id="PRU01336"/>
    </source>
</evidence>
<evidence type="ECO:0000255" key="31">
    <source>
        <dbReference type="PROSITE-ProRule" id="PRU01337"/>
    </source>
</evidence>
<evidence type="ECO:0000255" key="32">
    <source>
        <dbReference type="PROSITE-ProRule" id="PRU01338"/>
    </source>
</evidence>
<evidence type="ECO:0000255" key="33">
    <source>
        <dbReference type="PROSITE-ProRule" id="PRU01344"/>
    </source>
</evidence>
<evidence type="ECO:0000256" key="34">
    <source>
        <dbReference type="SAM" id="MobiDB-lite"/>
    </source>
</evidence>
<evidence type="ECO:0000305" key="35"/>
<organismHost>
    <name type="scientific">Homo sapiens</name>
    <name type="common">Human</name>
    <dbReference type="NCBI Taxonomy" id="9606"/>
</organismHost>
<dbReference type="EC" id="3.4.19.12"/>
<dbReference type="EC" id="3.4.22.-"/>
<dbReference type="EC" id="2.7.7.48"/>
<dbReference type="EC" id="2.7.7.50"/>
<dbReference type="EC" id="3.6.4.12"/>
<dbReference type="EC" id="3.6.4.13"/>
<dbReference type="EC" id="2.1.1.56"/>
<dbReference type="EC" id="3.1.13.-"/>
<dbReference type="EC" id="4.6.1.-"/>
<dbReference type="EC" id="2.1.1.57"/>
<dbReference type="EMBL" id="AY597011">
    <property type="protein sequence ID" value="AAT98578.1"/>
    <property type="molecule type" value="Genomic_RNA"/>
</dbReference>
<dbReference type="SMR" id="P0C6X2"/>
<dbReference type="IntAct" id="P0C6X2">
    <property type="interactions" value="1"/>
</dbReference>
<dbReference type="DNASU" id="3200429"/>
<dbReference type="KEGG" id="vg:3200429"/>
<dbReference type="SABIO-RK" id="P0C6X2"/>
<dbReference type="Proteomes" id="UP000008170">
    <property type="component" value="Segment"/>
</dbReference>
<dbReference type="GO" id="GO:0044172">
    <property type="term" value="C:host cell endoplasmic reticulum-Golgi intermediate compartment"/>
    <property type="evidence" value="ECO:0007669"/>
    <property type="project" value="UniProtKB-SubCell"/>
</dbReference>
<dbReference type="GO" id="GO:0033644">
    <property type="term" value="C:host cell membrane"/>
    <property type="evidence" value="ECO:0007669"/>
    <property type="project" value="UniProtKB-SubCell"/>
</dbReference>
<dbReference type="GO" id="GO:0044220">
    <property type="term" value="C:host cell perinuclear region of cytoplasm"/>
    <property type="evidence" value="ECO:0007669"/>
    <property type="project" value="UniProtKB-SubCell"/>
</dbReference>
<dbReference type="GO" id="GO:0016020">
    <property type="term" value="C:membrane"/>
    <property type="evidence" value="ECO:0007669"/>
    <property type="project" value="UniProtKB-KW"/>
</dbReference>
<dbReference type="GO" id="GO:0000175">
    <property type="term" value="F:3'-5'-RNA exonuclease activity"/>
    <property type="evidence" value="ECO:0007669"/>
    <property type="project" value="InterPro"/>
</dbReference>
<dbReference type="GO" id="GO:0043139">
    <property type="term" value="F:5'-3' DNA helicase activity"/>
    <property type="evidence" value="ECO:0007669"/>
    <property type="project" value="TreeGrafter"/>
</dbReference>
<dbReference type="GO" id="GO:0005524">
    <property type="term" value="F:ATP binding"/>
    <property type="evidence" value="ECO:0007669"/>
    <property type="project" value="UniProtKB-KW"/>
</dbReference>
<dbReference type="GO" id="GO:0016887">
    <property type="term" value="F:ATP hydrolysis activity"/>
    <property type="evidence" value="ECO:0007669"/>
    <property type="project" value="RHEA"/>
</dbReference>
<dbReference type="GO" id="GO:0004843">
    <property type="term" value="F:cysteine-type deubiquitinase activity"/>
    <property type="evidence" value="ECO:0007669"/>
    <property type="project" value="UniProtKB-EC"/>
</dbReference>
<dbReference type="GO" id="GO:0004197">
    <property type="term" value="F:cysteine-type endopeptidase activity"/>
    <property type="evidence" value="ECO:0007669"/>
    <property type="project" value="InterPro"/>
</dbReference>
<dbReference type="GO" id="GO:0004519">
    <property type="term" value="F:endonuclease activity"/>
    <property type="evidence" value="ECO:0007669"/>
    <property type="project" value="UniProtKB-KW"/>
</dbReference>
<dbReference type="GO" id="GO:0016829">
    <property type="term" value="F:lyase activity"/>
    <property type="evidence" value="ECO:0007669"/>
    <property type="project" value="UniProtKB-KW"/>
</dbReference>
<dbReference type="GO" id="GO:0004483">
    <property type="term" value="F:mRNA (nucleoside-2'-O-)-methyltransferase activity"/>
    <property type="evidence" value="ECO:0007669"/>
    <property type="project" value="InterPro"/>
</dbReference>
<dbReference type="GO" id="GO:0004482">
    <property type="term" value="F:mRNA 5'-cap (guanine-N7-)-methyltransferase activity"/>
    <property type="evidence" value="ECO:0007669"/>
    <property type="project" value="InterPro"/>
</dbReference>
<dbReference type="GO" id="GO:0008242">
    <property type="term" value="F:omega peptidase activity"/>
    <property type="evidence" value="ECO:0007669"/>
    <property type="project" value="InterPro"/>
</dbReference>
<dbReference type="GO" id="GO:0003724">
    <property type="term" value="F:RNA helicase activity"/>
    <property type="evidence" value="ECO:0007669"/>
    <property type="project" value="UniProtKB-EC"/>
</dbReference>
<dbReference type="GO" id="GO:0003968">
    <property type="term" value="F:RNA-directed RNA polymerase activity"/>
    <property type="evidence" value="ECO:0007669"/>
    <property type="project" value="UniProtKB-KW"/>
</dbReference>
<dbReference type="GO" id="GO:0003727">
    <property type="term" value="F:single-stranded RNA binding"/>
    <property type="evidence" value="ECO:0007669"/>
    <property type="project" value="InterPro"/>
</dbReference>
<dbReference type="GO" id="GO:0008270">
    <property type="term" value="F:zinc ion binding"/>
    <property type="evidence" value="ECO:0007669"/>
    <property type="project" value="UniProtKB-KW"/>
</dbReference>
<dbReference type="GO" id="GO:0006351">
    <property type="term" value="P:DNA-templated transcription"/>
    <property type="evidence" value="ECO:0007669"/>
    <property type="project" value="InterPro"/>
</dbReference>
<dbReference type="GO" id="GO:0006508">
    <property type="term" value="P:proteolysis"/>
    <property type="evidence" value="ECO:0007669"/>
    <property type="project" value="UniProtKB-KW"/>
</dbReference>
<dbReference type="GO" id="GO:0010506">
    <property type="term" value="P:regulation of autophagy"/>
    <property type="evidence" value="ECO:0007669"/>
    <property type="project" value="InterPro"/>
</dbReference>
<dbReference type="GO" id="GO:0039520">
    <property type="term" value="P:symbiont-mediated activation of host autophagy"/>
    <property type="evidence" value="ECO:0007669"/>
    <property type="project" value="UniProtKB-KW"/>
</dbReference>
<dbReference type="GO" id="GO:0039595">
    <property type="term" value="P:symbiont-mediated degradation of host mRNA"/>
    <property type="evidence" value="ECO:0007669"/>
    <property type="project" value="UniProtKB-KW"/>
</dbReference>
<dbReference type="GO" id="GO:0039648">
    <property type="term" value="P:symbiont-mediated perturbation of host ubiquitin-like protein modification"/>
    <property type="evidence" value="ECO:0007669"/>
    <property type="project" value="UniProtKB-KW"/>
</dbReference>
<dbReference type="GO" id="GO:0039657">
    <property type="term" value="P:symbiont-mediated suppression of host gene expression"/>
    <property type="evidence" value="ECO:0007669"/>
    <property type="project" value="UniProtKB-KW"/>
</dbReference>
<dbReference type="GO" id="GO:0039579">
    <property type="term" value="P:symbiont-mediated suppression of host ISG15-protein conjugation"/>
    <property type="evidence" value="ECO:0007669"/>
    <property type="project" value="UniProtKB-KW"/>
</dbReference>
<dbReference type="GO" id="GO:0085034">
    <property type="term" value="P:symbiont-mediated suppression of host NF-kappaB cascade"/>
    <property type="evidence" value="ECO:0007669"/>
    <property type="project" value="UniProtKB-KW"/>
</dbReference>
<dbReference type="GO" id="GO:0039502">
    <property type="term" value="P:symbiont-mediated suppression of host type I interferon-mediated signaling pathway"/>
    <property type="evidence" value="ECO:0007669"/>
    <property type="project" value="UniProtKB-KW"/>
</dbReference>
<dbReference type="GO" id="GO:0019079">
    <property type="term" value="P:viral genome replication"/>
    <property type="evidence" value="ECO:0007669"/>
    <property type="project" value="InterPro"/>
</dbReference>
<dbReference type="GO" id="GO:0019082">
    <property type="term" value="P:viral protein processing"/>
    <property type="evidence" value="ECO:0007669"/>
    <property type="project" value="InterPro"/>
</dbReference>
<dbReference type="GO" id="GO:0075523">
    <property type="term" value="P:viral translational frameshifting"/>
    <property type="evidence" value="ECO:0007669"/>
    <property type="project" value="UniProtKB-KW"/>
</dbReference>
<dbReference type="CDD" id="cd21409">
    <property type="entry name" value="1B_cv_Nsp13-like"/>
    <property type="match status" value="1"/>
</dbReference>
<dbReference type="CDD" id="cd21901">
    <property type="entry name" value="alpha_betaCoV_Nsp10"/>
    <property type="match status" value="1"/>
</dbReference>
<dbReference type="CDD" id="cd21560">
    <property type="entry name" value="betaCoV-Nsp6"/>
    <property type="match status" value="1"/>
</dbReference>
<dbReference type="CDD" id="cd21722">
    <property type="entry name" value="betaCoV_Nsp13-helicase"/>
    <property type="match status" value="1"/>
</dbReference>
<dbReference type="CDD" id="cd21659">
    <property type="entry name" value="betaCoV_Nsp14"/>
    <property type="match status" value="1"/>
</dbReference>
<dbReference type="CDD" id="cd21519">
    <property type="entry name" value="betaCoV_Nsp2_MHV-like"/>
    <property type="match status" value="1"/>
</dbReference>
<dbReference type="CDD" id="cd21666">
    <property type="entry name" value="betaCoV_Nsp5_Mpro"/>
    <property type="match status" value="1"/>
</dbReference>
<dbReference type="CDD" id="cd21827">
    <property type="entry name" value="betaCoV_Nsp7"/>
    <property type="match status" value="1"/>
</dbReference>
<dbReference type="CDD" id="cd21831">
    <property type="entry name" value="betaCoV_Nsp8"/>
    <property type="match status" value="1"/>
</dbReference>
<dbReference type="CDD" id="cd21898">
    <property type="entry name" value="betaCoV_Nsp9"/>
    <property type="match status" value="1"/>
</dbReference>
<dbReference type="CDD" id="cd21732">
    <property type="entry name" value="betaCoV_PLPro"/>
    <property type="match status" value="1"/>
</dbReference>
<dbReference type="CDD" id="cd23528">
    <property type="entry name" value="capping_2-OMTase_betaCoV_Nsp16"/>
    <property type="match status" value="1"/>
</dbReference>
<dbReference type="CDD" id="cd21473">
    <property type="entry name" value="cv_Nsp4_TM"/>
    <property type="match status" value="1"/>
</dbReference>
<dbReference type="CDD" id="cd21593">
    <property type="entry name" value="HCoV_HKU1-like_RdRp"/>
    <property type="match status" value="1"/>
</dbReference>
<dbReference type="CDD" id="cd21167">
    <property type="entry name" value="M_alpha_beta_cv_Nsp15-like"/>
    <property type="match status" value="1"/>
</dbReference>
<dbReference type="CDD" id="cd21557">
    <property type="entry name" value="Macro_X_Nsp3-like"/>
    <property type="match status" value="1"/>
</dbReference>
<dbReference type="CDD" id="cd21879">
    <property type="entry name" value="MHV-like_Nsp1"/>
    <property type="match status" value="1"/>
</dbReference>
<dbReference type="CDD" id="cd21812">
    <property type="entry name" value="MHV-like_Nsp3_betaSM"/>
    <property type="match status" value="1"/>
</dbReference>
<dbReference type="CDD" id="cd21824">
    <property type="entry name" value="MHV-like_Nsp3_NAB"/>
    <property type="match status" value="1"/>
</dbReference>
<dbReference type="CDD" id="cd21161">
    <property type="entry name" value="NendoU_cv_Nsp15-like"/>
    <property type="match status" value="1"/>
</dbReference>
<dbReference type="CDD" id="cd21171">
    <property type="entry name" value="NTD_alpha_betaCoV_Nsp15-like"/>
    <property type="match status" value="1"/>
</dbReference>
<dbReference type="CDD" id="cd21689">
    <property type="entry name" value="stalk_CoV_Nsp13-like"/>
    <property type="match status" value="1"/>
</dbReference>
<dbReference type="CDD" id="cd21714">
    <property type="entry name" value="TM_Y_MHV-like_Nsp3_C"/>
    <property type="match status" value="1"/>
</dbReference>
<dbReference type="CDD" id="cd21467">
    <property type="entry name" value="Ubl1_cv_Nsp3_N-like"/>
    <property type="match status" value="1"/>
</dbReference>
<dbReference type="CDD" id="cd21401">
    <property type="entry name" value="ZBD_cv_Nsp13-like"/>
    <property type="match status" value="1"/>
</dbReference>
<dbReference type="FunFam" id="1.10.150.420:FF:000001">
    <property type="entry name" value="Replicase polyprotein"/>
    <property type="match status" value="1"/>
</dbReference>
<dbReference type="Gene3D" id="1.10.8.1190">
    <property type="match status" value="2"/>
</dbReference>
<dbReference type="Gene3D" id="2.60.120.1680">
    <property type="match status" value="1"/>
</dbReference>
<dbReference type="Gene3D" id="3.10.20.350">
    <property type="match status" value="1"/>
</dbReference>
<dbReference type="Gene3D" id="3.10.20.540">
    <property type="match status" value="1"/>
</dbReference>
<dbReference type="Gene3D" id="3.40.50.11580">
    <property type="match status" value="1"/>
</dbReference>
<dbReference type="Gene3D" id="6.10.140.2090">
    <property type="match status" value="1"/>
</dbReference>
<dbReference type="Gene3D" id="1.10.150.420">
    <property type="entry name" value="Coronavirus nonstructural protein 4 C-terminus"/>
    <property type="match status" value="1"/>
</dbReference>
<dbReference type="Gene3D" id="3.40.220.10">
    <property type="entry name" value="Leucine Aminopeptidase, subunit E, domain 1"/>
    <property type="match status" value="1"/>
</dbReference>
<dbReference type="Gene3D" id="1.10.1840.10">
    <property type="entry name" value="main proteinase (3clpro) structure, domain 3"/>
    <property type="match status" value="1"/>
</dbReference>
<dbReference type="Gene3D" id="3.30.160.820">
    <property type="entry name" value="Nsp15 N-terminal domain-like"/>
    <property type="match status" value="1"/>
</dbReference>
<dbReference type="Gene3D" id="1.10.8.370">
    <property type="entry name" value="nsp7 replicase"/>
    <property type="match status" value="1"/>
</dbReference>
<dbReference type="Gene3D" id="3.30.70.3540">
    <property type="entry name" value="Nsp8 replicase, head domain"/>
    <property type="match status" value="1"/>
</dbReference>
<dbReference type="Gene3D" id="3.40.50.300">
    <property type="entry name" value="P-loop containing nucleotide triphosphate hydrolases"/>
    <property type="match status" value="2"/>
</dbReference>
<dbReference type="Gene3D" id="2.40.10.250">
    <property type="entry name" value="Replicase NSP9"/>
    <property type="match status" value="1"/>
</dbReference>
<dbReference type="Gene3D" id="3.40.50.11020">
    <property type="entry name" value="Replicase polyprotein, nucleic acid-binding domain"/>
    <property type="match status" value="1"/>
</dbReference>
<dbReference type="Gene3D" id="2.40.10.10">
    <property type="entry name" value="Trypsin-like serine proteases"/>
    <property type="match status" value="2"/>
</dbReference>
<dbReference type="Gene3D" id="3.40.50.150">
    <property type="entry name" value="Vaccinia Virus protein VP39"/>
    <property type="match status" value="1"/>
</dbReference>
<dbReference type="InterPro" id="IPR027351">
    <property type="entry name" value="(+)RNA_virus_helicase_core_dom"/>
</dbReference>
<dbReference type="InterPro" id="IPR046443">
    <property type="entry name" value="a/bCoV_NSP1_glob"/>
</dbReference>
<dbReference type="InterPro" id="IPR046440">
    <property type="entry name" value="AV_NSP11N_COV_NSP15M"/>
</dbReference>
<dbReference type="InterPro" id="IPR022570">
    <property type="entry name" value="B-CoV_A_NSP1"/>
</dbReference>
<dbReference type="InterPro" id="IPR046442">
    <property type="entry name" value="bCoV_NSP1_C"/>
</dbReference>
<dbReference type="InterPro" id="IPR050534">
    <property type="entry name" value="Coronavir_polyprotein_1ab"/>
</dbReference>
<dbReference type="InterPro" id="IPR043608">
    <property type="entry name" value="CoV_NSP15_M"/>
</dbReference>
<dbReference type="InterPro" id="IPR043606">
    <property type="entry name" value="CoV_NSP15_N"/>
</dbReference>
<dbReference type="InterPro" id="IPR043613">
    <property type="entry name" value="CoV_NSP2_C"/>
</dbReference>
<dbReference type="InterPro" id="IPR047573">
    <property type="entry name" value="CoV_NSP2_M"/>
</dbReference>
<dbReference type="InterPro" id="IPR049894">
    <property type="entry name" value="COV_NSP3_3ECTO"/>
</dbReference>
<dbReference type="InterPro" id="IPR043611">
    <property type="entry name" value="CoV_NSP3_C"/>
</dbReference>
<dbReference type="InterPro" id="IPR047566">
    <property type="entry name" value="CoV_NSP3_Y"/>
</dbReference>
<dbReference type="InterPro" id="IPR032505">
    <property type="entry name" value="CoV_NSP4_C"/>
</dbReference>
<dbReference type="InterPro" id="IPR043612">
    <property type="entry name" value="CoV_NSP4_N"/>
</dbReference>
<dbReference type="InterPro" id="IPR043502">
    <property type="entry name" value="DNA/RNA_pol_sf"/>
</dbReference>
<dbReference type="InterPro" id="IPR041679">
    <property type="entry name" value="DNA2/NAM7-like_C"/>
</dbReference>
<dbReference type="InterPro" id="IPR022733">
    <property type="entry name" value="DPUP_SUD_C_bCoV"/>
</dbReference>
<dbReference type="InterPro" id="IPR037227">
    <property type="entry name" value="EndoU-like"/>
</dbReference>
<dbReference type="InterPro" id="IPR002589">
    <property type="entry name" value="Macro_dom"/>
</dbReference>
<dbReference type="InterPro" id="IPR043472">
    <property type="entry name" value="Macro_dom-like"/>
</dbReference>
<dbReference type="InterPro" id="IPR044371">
    <property type="entry name" value="Macro_X_NSP3-like"/>
</dbReference>
<dbReference type="InterPro" id="IPR046435">
    <property type="entry name" value="N7_MTase_CoV"/>
</dbReference>
<dbReference type="InterPro" id="IPR043609">
    <property type="entry name" value="NendoU_nidovirus"/>
</dbReference>
<dbReference type="InterPro" id="IPR044863">
    <property type="entry name" value="NIRAN"/>
</dbReference>
<dbReference type="InterPro" id="IPR046438">
    <property type="entry name" value="NIV_2_O_MTASE"/>
</dbReference>
<dbReference type="InterPro" id="IPR046436">
    <property type="entry name" value="NIV_EXON"/>
</dbReference>
<dbReference type="InterPro" id="IPR036333">
    <property type="entry name" value="NSP10_sf_CoV"/>
</dbReference>
<dbReference type="InterPro" id="IPR047570">
    <property type="entry name" value="NSP12_IF_CoV"/>
</dbReference>
<dbReference type="InterPro" id="IPR044343">
    <property type="entry name" value="NSP13_1B_dom_CoV"/>
</dbReference>
<dbReference type="InterPro" id="IPR048673">
    <property type="entry name" value="NSP13_stalk_CoV"/>
</dbReference>
<dbReference type="InterPro" id="IPR048672">
    <property type="entry name" value="NSP13_ZBD_CoV"/>
</dbReference>
<dbReference type="InterPro" id="IPR027352">
    <property type="entry name" value="NSP13_ZBD_CoV-like"/>
</dbReference>
<dbReference type="InterPro" id="IPR044315">
    <property type="entry name" value="NSP14_betaCoV"/>
</dbReference>
<dbReference type="InterPro" id="IPR009466">
    <property type="entry name" value="NSP14_CoV"/>
</dbReference>
<dbReference type="InterPro" id="IPR044330">
    <property type="entry name" value="NSP15_alpha_betaCoV_N"/>
</dbReference>
<dbReference type="InterPro" id="IPR044322">
    <property type="entry name" value="NSP15_M_alpha_beta_CoV"/>
</dbReference>
<dbReference type="InterPro" id="IPR043174">
    <property type="entry name" value="NSP15_middle_sf"/>
</dbReference>
<dbReference type="InterPro" id="IPR042515">
    <property type="entry name" value="NSP15_N_CoV"/>
</dbReference>
<dbReference type="InterPro" id="IPR044401">
    <property type="entry name" value="NSP15_NendoU_CoV"/>
</dbReference>
<dbReference type="InterPro" id="IPR009461">
    <property type="entry name" value="NSP16_CoV-like"/>
</dbReference>
<dbReference type="InterPro" id="IPR044384">
    <property type="entry name" value="NSP2_MHV-like"/>
</dbReference>
<dbReference type="InterPro" id="IPR043615">
    <property type="entry name" value="NSP2_N_CoV"/>
</dbReference>
<dbReference type="InterPro" id="IPR044381">
    <property type="entry name" value="NSP3_DPUP_MHV"/>
</dbReference>
<dbReference type="InterPro" id="IPR047567">
    <property type="entry name" value="NSP3_G2M_bCoV"/>
</dbReference>
<dbReference type="InterPro" id="IPR032592">
    <property type="entry name" value="NSP3_NAB_bCoV"/>
</dbReference>
<dbReference type="InterPro" id="IPR042570">
    <property type="entry name" value="NSP3_NAB_bCoV_sf"/>
</dbReference>
<dbReference type="InterPro" id="IPR044357">
    <property type="entry name" value="NSP3_Ubl1_dom_CoV"/>
</dbReference>
<dbReference type="InterPro" id="IPR044353">
    <property type="entry name" value="Nsp3_Ubl2_dom_CoV"/>
</dbReference>
<dbReference type="InterPro" id="IPR038083">
    <property type="entry name" value="NSP3A-like"/>
</dbReference>
<dbReference type="InterPro" id="IPR038123">
    <property type="entry name" value="NSP4_C_sf_CoV"/>
</dbReference>
<dbReference type="InterPro" id="IPR044367">
    <property type="entry name" value="NSP6_betaCoV"/>
</dbReference>
<dbReference type="InterPro" id="IPR043610">
    <property type="entry name" value="NSP6_CoV"/>
</dbReference>
<dbReference type="InterPro" id="IPR014828">
    <property type="entry name" value="NSP7_CoV"/>
</dbReference>
<dbReference type="InterPro" id="IPR037204">
    <property type="entry name" value="NSP7_sf_CoV"/>
</dbReference>
<dbReference type="InterPro" id="IPR014829">
    <property type="entry name" value="NSP8_CoV"/>
</dbReference>
<dbReference type="InterPro" id="IPR037230">
    <property type="entry name" value="NSP8_sf_CoV"/>
</dbReference>
<dbReference type="InterPro" id="IPR014822">
    <property type="entry name" value="NSP9_CoV"/>
</dbReference>
<dbReference type="InterPro" id="IPR036499">
    <property type="entry name" value="NSP9_sf_CoV"/>
</dbReference>
<dbReference type="InterPro" id="IPR027417">
    <property type="entry name" value="P-loop_NTPase"/>
</dbReference>
<dbReference type="InterPro" id="IPR002705">
    <property type="entry name" value="Pept_C30/C16_B_coronavir"/>
</dbReference>
<dbReference type="InterPro" id="IPR013016">
    <property type="entry name" value="Peptidase_C16_CoV"/>
</dbReference>
<dbReference type="InterPro" id="IPR008740">
    <property type="entry name" value="Peptidase_C30_CoV"/>
</dbReference>
<dbReference type="InterPro" id="IPR043477">
    <property type="entry name" value="Peptidase_C30_dom3_CoV"/>
</dbReference>
<dbReference type="InterPro" id="IPR009003">
    <property type="entry name" value="Peptidase_S1_PA"/>
</dbReference>
<dbReference type="InterPro" id="IPR043504">
    <property type="entry name" value="Peptidase_S1_PA_chymotrypsin"/>
</dbReference>
<dbReference type="InterPro" id="IPR043177">
    <property type="entry name" value="PLpro_N_sf_CoV"/>
</dbReference>
<dbReference type="InterPro" id="IPR043503">
    <property type="entry name" value="PLpro_palm_finger_dom_CoV"/>
</dbReference>
<dbReference type="InterPro" id="IPR043178">
    <property type="entry name" value="PLpro_thumb_sf_CoV"/>
</dbReference>
<dbReference type="InterPro" id="IPR046441">
    <property type="entry name" value="RdRp_CoV"/>
</dbReference>
<dbReference type="InterPro" id="IPR044347">
    <property type="entry name" value="RdRp_HCoV_HKU1-like"/>
</dbReference>
<dbReference type="InterPro" id="IPR009469">
    <property type="entry name" value="RdRp_N_CoV"/>
</dbReference>
<dbReference type="InterPro" id="IPR001205">
    <property type="entry name" value="RNA-dir_pol_C"/>
</dbReference>
<dbReference type="InterPro" id="IPR018995">
    <property type="entry name" value="RNA_synth_NSP10_CoV"/>
</dbReference>
<dbReference type="InterPro" id="IPR029063">
    <property type="entry name" value="SAM-dependent_MTases_sf"/>
</dbReference>
<dbReference type="PANTHER" id="PTHR43788">
    <property type="entry name" value="DNA2/NAM7 HELICASE FAMILY MEMBER"/>
    <property type="match status" value="1"/>
</dbReference>
<dbReference type="PANTHER" id="PTHR43788:SF16">
    <property type="entry name" value="HELICASE WITH ZINC FINGER 2"/>
    <property type="match status" value="1"/>
</dbReference>
<dbReference type="Pfam" id="PF13087">
    <property type="entry name" value="AAA_12"/>
    <property type="match status" value="1"/>
</dbReference>
<dbReference type="Pfam" id="PF13604">
    <property type="entry name" value="AAA_30"/>
    <property type="match status" value="1"/>
</dbReference>
<dbReference type="Pfam" id="PF11963">
    <property type="entry name" value="B-CoV_A_NSP1"/>
    <property type="match status" value="1"/>
</dbReference>
<dbReference type="Pfam" id="PF16251">
    <property type="entry name" value="bCoV_NAB"/>
    <property type="match status" value="1"/>
</dbReference>
<dbReference type="Pfam" id="PF06471">
    <property type="entry name" value="CoV_ExoN"/>
    <property type="match status" value="1"/>
</dbReference>
<dbReference type="Pfam" id="PF06460">
    <property type="entry name" value="CoV_Methyltr_2"/>
    <property type="match status" value="1"/>
</dbReference>
<dbReference type="Pfam" id="PF09401">
    <property type="entry name" value="CoV_NSP10"/>
    <property type="match status" value="1"/>
</dbReference>
<dbReference type="Pfam" id="PF20631">
    <property type="entry name" value="CoV_NSP13_1B"/>
    <property type="match status" value="1"/>
</dbReference>
<dbReference type="Pfam" id="PF20633">
    <property type="entry name" value="CoV_NSP13_stalk"/>
    <property type="match status" value="1"/>
</dbReference>
<dbReference type="Pfam" id="PF20632">
    <property type="entry name" value="CoV_NSP13_ZBD"/>
    <property type="match status" value="1"/>
</dbReference>
<dbReference type="Pfam" id="PF19215">
    <property type="entry name" value="CoV_NSP15_C"/>
    <property type="match status" value="1"/>
</dbReference>
<dbReference type="Pfam" id="PF19216">
    <property type="entry name" value="CoV_NSP15_M"/>
    <property type="match status" value="1"/>
</dbReference>
<dbReference type="Pfam" id="PF19219">
    <property type="entry name" value="CoV_NSP15_N"/>
    <property type="match status" value="1"/>
</dbReference>
<dbReference type="Pfam" id="PF19218">
    <property type="entry name" value="CoV_NSP3_C"/>
    <property type="match status" value="1"/>
</dbReference>
<dbReference type="Pfam" id="PF16348">
    <property type="entry name" value="CoV_NSP4_C"/>
    <property type="match status" value="1"/>
</dbReference>
<dbReference type="Pfam" id="PF19217">
    <property type="entry name" value="CoV_NSP4_N"/>
    <property type="match status" value="1"/>
</dbReference>
<dbReference type="Pfam" id="PF19213">
    <property type="entry name" value="CoV_NSP6"/>
    <property type="match status" value="1"/>
</dbReference>
<dbReference type="Pfam" id="PF08716">
    <property type="entry name" value="CoV_NSP7"/>
    <property type="match status" value="1"/>
</dbReference>
<dbReference type="Pfam" id="PF08717">
    <property type="entry name" value="CoV_NSP8"/>
    <property type="match status" value="1"/>
</dbReference>
<dbReference type="Pfam" id="PF08710">
    <property type="entry name" value="CoV_NSP9"/>
    <property type="match status" value="1"/>
</dbReference>
<dbReference type="Pfam" id="PF08715">
    <property type="entry name" value="CoV_peptidase"/>
    <property type="match status" value="1"/>
</dbReference>
<dbReference type="Pfam" id="PF06478">
    <property type="entry name" value="CoV_RPol_N"/>
    <property type="match status" value="1"/>
</dbReference>
<dbReference type="Pfam" id="PF01661">
    <property type="entry name" value="Macro"/>
    <property type="match status" value="1"/>
</dbReference>
<dbReference type="Pfam" id="PF22104">
    <property type="entry name" value="MHV_Nsp3_DPUP"/>
    <property type="match status" value="1"/>
</dbReference>
<dbReference type="Pfam" id="PF01831">
    <property type="entry name" value="Peptidase_C16"/>
    <property type="match status" value="1"/>
</dbReference>
<dbReference type="Pfam" id="PF05409">
    <property type="entry name" value="Peptidase_C30"/>
    <property type="match status" value="1"/>
</dbReference>
<dbReference type="Pfam" id="PF00680">
    <property type="entry name" value="RdRP_1"/>
    <property type="match status" value="1"/>
</dbReference>
<dbReference type="SMART" id="SM00506">
    <property type="entry name" value="A1pp"/>
    <property type="match status" value="1"/>
</dbReference>
<dbReference type="SUPFAM" id="SSF144246">
    <property type="entry name" value="Coronavirus NSP10-like"/>
    <property type="match status" value="1"/>
</dbReference>
<dbReference type="SUPFAM" id="SSF140367">
    <property type="entry name" value="Coronavirus NSP7-like"/>
    <property type="match status" value="1"/>
</dbReference>
<dbReference type="SUPFAM" id="SSF143076">
    <property type="entry name" value="Coronavirus NSP8-like"/>
    <property type="match status" value="1"/>
</dbReference>
<dbReference type="SUPFAM" id="SSF56672">
    <property type="entry name" value="DNA/RNA polymerases"/>
    <property type="match status" value="1"/>
</dbReference>
<dbReference type="SUPFAM" id="SSF142877">
    <property type="entry name" value="EndoU-like"/>
    <property type="match status" value="1"/>
</dbReference>
<dbReference type="SUPFAM" id="SSF52949">
    <property type="entry name" value="Macro domain-like"/>
    <property type="match status" value="1"/>
</dbReference>
<dbReference type="SUPFAM" id="SSF159936">
    <property type="entry name" value="NSP3A-like"/>
    <property type="match status" value="1"/>
</dbReference>
<dbReference type="SUPFAM" id="SSF52540">
    <property type="entry name" value="P-loop containing nucleoside triphosphate hydrolases"/>
    <property type="match status" value="1"/>
</dbReference>
<dbReference type="SUPFAM" id="SSF101816">
    <property type="entry name" value="Replicase NSP9"/>
    <property type="match status" value="1"/>
</dbReference>
<dbReference type="SUPFAM" id="SSF53335">
    <property type="entry name" value="S-adenosyl-L-methionine-dependent methyltransferases"/>
    <property type="match status" value="1"/>
</dbReference>
<dbReference type="SUPFAM" id="SSF50494">
    <property type="entry name" value="Trypsin-like serine proteases"/>
    <property type="match status" value="1"/>
</dbReference>
<dbReference type="PROSITE" id="PS51961">
    <property type="entry name" value="AV_NSP11N_COV_NSP15M"/>
    <property type="match status" value="1"/>
</dbReference>
<dbReference type="PROSITE" id="PS51963">
    <property type="entry name" value="BCOV_NSP1_C"/>
    <property type="match status" value="1"/>
</dbReference>
<dbReference type="PROSITE" id="PS51942">
    <property type="entry name" value="BCOV_NSP3C_C"/>
    <property type="match status" value="1"/>
</dbReference>
<dbReference type="PROSITE" id="PS51994">
    <property type="entry name" value="BCOV_NSP3E_G2M"/>
    <property type="match status" value="1"/>
</dbReference>
<dbReference type="PROSITE" id="PS51945">
    <property type="entry name" value="BCOV_NSP3E_NAB"/>
    <property type="match status" value="1"/>
</dbReference>
<dbReference type="PROSITE" id="PS51993">
    <property type="entry name" value="COV_3ECTO"/>
    <property type="match status" value="1"/>
</dbReference>
<dbReference type="PROSITE" id="PS51952">
    <property type="entry name" value="COV_EXON_MTASE_COACT"/>
    <property type="match status" value="1"/>
</dbReference>
<dbReference type="PROSITE" id="PS51954">
    <property type="entry name" value="COV_N7_MTASE"/>
    <property type="match status" value="1"/>
</dbReference>
<dbReference type="PROSITE" id="PS51962">
    <property type="entry name" value="COV_NSP1"/>
    <property type="match status" value="1"/>
</dbReference>
<dbReference type="PROSITE" id="PS52000">
    <property type="entry name" value="COV_NSP12_IF"/>
    <property type="match status" value="1"/>
</dbReference>
<dbReference type="PROSITE" id="PS51948">
    <property type="entry name" value="COV_NSP12_RDRP"/>
    <property type="match status" value="1"/>
</dbReference>
<dbReference type="PROSITE" id="PS51960">
    <property type="entry name" value="COV_NSP15_NTD"/>
    <property type="match status" value="1"/>
</dbReference>
<dbReference type="PROSITE" id="PS51991">
    <property type="entry name" value="COV_NSP2_C"/>
    <property type="match status" value="1"/>
</dbReference>
<dbReference type="PROSITE" id="PS51990">
    <property type="entry name" value="COV_NSP2_M"/>
    <property type="match status" value="1"/>
</dbReference>
<dbReference type="PROSITE" id="PS51989">
    <property type="entry name" value="COV_NSP2_N"/>
    <property type="match status" value="1"/>
</dbReference>
<dbReference type="PROSITE" id="PS51992">
    <property type="entry name" value="COV_NSP3_Y"/>
    <property type="match status" value="1"/>
</dbReference>
<dbReference type="PROSITE" id="PS51943">
    <property type="entry name" value="COV_NSP3A_UBL"/>
    <property type="match status" value="1"/>
</dbReference>
<dbReference type="PROSITE" id="PS51944">
    <property type="entry name" value="COV_NSP3D_UBL"/>
    <property type="match status" value="1"/>
</dbReference>
<dbReference type="PROSITE" id="PS51946">
    <property type="entry name" value="COV_NSP4C"/>
    <property type="match status" value="1"/>
</dbReference>
<dbReference type="PROSITE" id="PS51949">
    <property type="entry name" value="COV_NSP7"/>
    <property type="match status" value="1"/>
</dbReference>
<dbReference type="PROSITE" id="PS51950">
    <property type="entry name" value="COV_NSP8"/>
    <property type="match status" value="1"/>
</dbReference>
<dbReference type="PROSITE" id="PS51951">
    <property type="entry name" value="COV_NSP9_SSRNA_BD"/>
    <property type="match status" value="1"/>
</dbReference>
<dbReference type="PROSITE" id="PS51653">
    <property type="entry name" value="CV_ZBD"/>
    <property type="match status" value="1"/>
</dbReference>
<dbReference type="PROSITE" id="PS51442">
    <property type="entry name" value="M_PRO"/>
    <property type="match status" value="1"/>
</dbReference>
<dbReference type="PROSITE" id="PS51154">
    <property type="entry name" value="MACRO"/>
    <property type="match status" value="1"/>
</dbReference>
<dbReference type="PROSITE" id="PS51958">
    <property type="entry name" value="NENDOU"/>
    <property type="match status" value="1"/>
</dbReference>
<dbReference type="PROSITE" id="PS51947">
    <property type="entry name" value="NIRAN"/>
    <property type="match status" value="1"/>
</dbReference>
<dbReference type="PROSITE" id="PS51955">
    <property type="entry name" value="NIV_2_O_MTASE"/>
    <property type="match status" value="1"/>
</dbReference>
<dbReference type="PROSITE" id="PS51953">
    <property type="entry name" value="NIV_EXON"/>
    <property type="match status" value="1"/>
</dbReference>
<dbReference type="PROSITE" id="PS51124">
    <property type="entry name" value="PEPTIDASE_C16"/>
    <property type="match status" value="2"/>
</dbReference>
<dbReference type="PROSITE" id="PS51657">
    <property type="entry name" value="PSRV_HELICASE"/>
    <property type="match status" value="1"/>
</dbReference>